<sequence>MAQKKPKRNLSALKRHRQSLKRRLRNKAKKSAIKTLSKKAIQLAQEGKAEEALKIMRKAESLIDKAAKGSTLHKNAAARRKSRLMRKVRQLLEAAGAPLIGGGLSA</sequence>
<dbReference type="EMBL" id="AJ295159">
    <property type="protein sequence ID" value="CAC15067.1"/>
    <property type="molecule type" value="Genomic_DNA"/>
</dbReference>
<dbReference type="EMBL" id="AP008226">
    <property type="protein sequence ID" value="BAD71220.1"/>
    <property type="molecule type" value="Genomic_DNA"/>
</dbReference>
<dbReference type="RefSeq" id="WP_011228650.1">
    <property type="nucleotide sequence ID" value="NC_006461.1"/>
</dbReference>
<dbReference type="RefSeq" id="YP_144663.1">
    <property type="nucleotide sequence ID" value="NC_006461.1"/>
</dbReference>
<dbReference type="PDB" id="1FJG">
    <property type="method" value="X-ray"/>
    <property type="resolution" value="3.00 A"/>
    <property type="chains" value="T=1-106"/>
</dbReference>
<dbReference type="PDB" id="1HNW">
    <property type="method" value="X-ray"/>
    <property type="resolution" value="3.40 A"/>
    <property type="chains" value="T=1-106"/>
</dbReference>
<dbReference type="PDB" id="1HNX">
    <property type="method" value="X-ray"/>
    <property type="resolution" value="3.40 A"/>
    <property type="chains" value="T=1-106"/>
</dbReference>
<dbReference type="PDB" id="1HNZ">
    <property type="method" value="X-ray"/>
    <property type="resolution" value="3.30 A"/>
    <property type="chains" value="T=1-106"/>
</dbReference>
<dbReference type="PDB" id="1HR0">
    <property type="method" value="X-ray"/>
    <property type="resolution" value="3.20 A"/>
    <property type="chains" value="T=1-106"/>
</dbReference>
<dbReference type="PDB" id="1I94">
    <property type="method" value="X-ray"/>
    <property type="resolution" value="3.20 A"/>
    <property type="chains" value="T=2-106"/>
</dbReference>
<dbReference type="PDB" id="1I95">
    <property type="method" value="X-ray"/>
    <property type="resolution" value="4.50 A"/>
    <property type="chains" value="T=2-106"/>
</dbReference>
<dbReference type="PDB" id="1I96">
    <property type="method" value="X-ray"/>
    <property type="resolution" value="4.20 A"/>
    <property type="chains" value="T=2-106"/>
</dbReference>
<dbReference type="PDB" id="1I97">
    <property type="method" value="X-ray"/>
    <property type="resolution" value="4.50 A"/>
    <property type="chains" value="T=2-106"/>
</dbReference>
<dbReference type="PDB" id="1IBK">
    <property type="method" value="X-ray"/>
    <property type="resolution" value="3.31 A"/>
    <property type="chains" value="T=1-106"/>
</dbReference>
<dbReference type="PDB" id="1IBL">
    <property type="method" value="X-ray"/>
    <property type="resolution" value="3.11 A"/>
    <property type="chains" value="T=1-106"/>
</dbReference>
<dbReference type="PDB" id="1IBM">
    <property type="method" value="X-ray"/>
    <property type="resolution" value="3.31 A"/>
    <property type="chains" value="T=1-106"/>
</dbReference>
<dbReference type="PDB" id="1J5E">
    <property type="method" value="X-ray"/>
    <property type="resolution" value="3.05 A"/>
    <property type="chains" value="T=1-106"/>
</dbReference>
<dbReference type="PDB" id="1JGO">
    <property type="method" value="X-ray"/>
    <property type="resolution" value="5.60 A"/>
    <property type="chains" value="W=1-106"/>
</dbReference>
<dbReference type="PDB" id="1JGP">
    <property type="method" value="X-ray"/>
    <property type="resolution" value="7.00 A"/>
    <property type="chains" value="W=1-106"/>
</dbReference>
<dbReference type="PDB" id="1JGQ">
    <property type="method" value="X-ray"/>
    <property type="resolution" value="5.00 A"/>
    <property type="chains" value="W=1-106"/>
</dbReference>
<dbReference type="PDB" id="1ML5">
    <property type="method" value="EM"/>
    <property type="resolution" value="14.00 A"/>
    <property type="chains" value="W=1-106"/>
</dbReference>
<dbReference type="PDB" id="1N32">
    <property type="method" value="X-ray"/>
    <property type="resolution" value="3.00 A"/>
    <property type="chains" value="T=1-106"/>
</dbReference>
<dbReference type="PDB" id="1N33">
    <property type="method" value="X-ray"/>
    <property type="resolution" value="3.35 A"/>
    <property type="chains" value="T=1-106"/>
</dbReference>
<dbReference type="PDB" id="1N34">
    <property type="method" value="X-ray"/>
    <property type="resolution" value="3.80 A"/>
    <property type="chains" value="T=1-106"/>
</dbReference>
<dbReference type="PDB" id="1N36">
    <property type="method" value="X-ray"/>
    <property type="resolution" value="3.65 A"/>
    <property type="chains" value="T=1-106"/>
</dbReference>
<dbReference type="PDB" id="1VVJ">
    <property type="method" value="X-ray"/>
    <property type="resolution" value="3.44 A"/>
    <property type="chains" value="QT/XT=1-106"/>
</dbReference>
<dbReference type="PDB" id="1VY4">
    <property type="method" value="X-ray"/>
    <property type="resolution" value="2.60 A"/>
    <property type="chains" value="AT/CT=1-106"/>
</dbReference>
<dbReference type="PDB" id="1VY5">
    <property type="method" value="X-ray"/>
    <property type="resolution" value="2.55 A"/>
    <property type="chains" value="AT/CT=1-106"/>
</dbReference>
<dbReference type="PDB" id="1VY6">
    <property type="method" value="X-ray"/>
    <property type="resolution" value="2.90 A"/>
    <property type="chains" value="AT/CT=1-106"/>
</dbReference>
<dbReference type="PDB" id="1VY7">
    <property type="method" value="X-ray"/>
    <property type="resolution" value="2.80 A"/>
    <property type="chains" value="AT/CT=1-106"/>
</dbReference>
<dbReference type="PDB" id="1XMO">
    <property type="method" value="X-ray"/>
    <property type="resolution" value="3.25 A"/>
    <property type="chains" value="T=1-106"/>
</dbReference>
<dbReference type="PDB" id="1XMQ">
    <property type="method" value="X-ray"/>
    <property type="resolution" value="3.00 A"/>
    <property type="chains" value="T=1-106"/>
</dbReference>
<dbReference type="PDB" id="1XNQ">
    <property type="method" value="X-ray"/>
    <property type="resolution" value="3.05 A"/>
    <property type="chains" value="T=1-106"/>
</dbReference>
<dbReference type="PDB" id="1XNR">
    <property type="method" value="X-ray"/>
    <property type="resolution" value="3.10 A"/>
    <property type="chains" value="T=1-106"/>
</dbReference>
<dbReference type="PDB" id="2E5L">
    <property type="method" value="X-ray"/>
    <property type="resolution" value="3.30 A"/>
    <property type="chains" value="T=2-106"/>
</dbReference>
<dbReference type="PDB" id="2F4V">
    <property type="method" value="X-ray"/>
    <property type="resolution" value="3.80 A"/>
    <property type="chains" value="T=1-106"/>
</dbReference>
<dbReference type="PDB" id="2HHH">
    <property type="method" value="X-ray"/>
    <property type="resolution" value="3.35 A"/>
    <property type="chains" value="T=1-106"/>
</dbReference>
<dbReference type="PDB" id="2UU9">
    <property type="method" value="X-ray"/>
    <property type="resolution" value="3.10 A"/>
    <property type="chains" value="T=2-106"/>
</dbReference>
<dbReference type="PDB" id="2UUA">
    <property type="method" value="X-ray"/>
    <property type="resolution" value="2.90 A"/>
    <property type="chains" value="T=2-106"/>
</dbReference>
<dbReference type="PDB" id="2UUB">
    <property type="method" value="X-ray"/>
    <property type="resolution" value="2.80 A"/>
    <property type="chains" value="T=2-106"/>
</dbReference>
<dbReference type="PDB" id="2UUC">
    <property type="method" value="X-ray"/>
    <property type="resolution" value="3.10 A"/>
    <property type="chains" value="T=2-106"/>
</dbReference>
<dbReference type="PDB" id="2ZM6">
    <property type="method" value="X-ray"/>
    <property type="resolution" value="3.30 A"/>
    <property type="chains" value="T=2-106"/>
</dbReference>
<dbReference type="PDB" id="3OTO">
    <property type="method" value="X-ray"/>
    <property type="resolution" value="3.69 A"/>
    <property type="chains" value="T=1-106"/>
</dbReference>
<dbReference type="PDB" id="4AQY">
    <property type="method" value="X-ray"/>
    <property type="resolution" value="3.50 A"/>
    <property type="chains" value="T=1-106"/>
</dbReference>
<dbReference type="PDB" id="4B3M">
    <property type="method" value="X-ray"/>
    <property type="resolution" value="2.90 A"/>
    <property type="chains" value="T=1-106"/>
</dbReference>
<dbReference type="PDB" id="4B3R">
    <property type="method" value="X-ray"/>
    <property type="resolution" value="3.00 A"/>
    <property type="chains" value="T=1-106"/>
</dbReference>
<dbReference type="PDB" id="4B3S">
    <property type="method" value="X-ray"/>
    <property type="resolution" value="3.15 A"/>
    <property type="chains" value="T=1-106"/>
</dbReference>
<dbReference type="PDB" id="4B3T">
    <property type="method" value="X-ray"/>
    <property type="resolution" value="3.00 A"/>
    <property type="chains" value="T=1-106"/>
</dbReference>
<dbReference type="PDB" id="4DR1">
    <property type="method" value="X-ray"/>
    <property type="resolution" value="3.60 A"/>
    <property type="chains" value="T=1-106"/>
</dbReference>
<dbReference type="PDB" id="4DR2">
    <property type="method" value="X-ray"/>
    <property type="resolution" value="3.25 A"/>
    <property type="chains" value="T=1-106"/>
</dbReference>
<dbReference type="PDB" id="4DR3">
    <property type="method" value="X-ray"/>
    <property type="resolution" value="3.35 A"/>
    <property type="chains" value="T=1-106"/>
</dbReference>
<dbReference type="PDB" id="4DR4">
    <property type="method" value="X-ray"/>
    <property type="resolution" value="3.97 A"/>
    <property type="chains" value="T=1-106"/>
</dbReference>
<dbReference type="PDB" id="4DR5">
    <property type="method" value="X-ray"/>
    <property type="resolution" value="3.45 A"/>
    <property type="chains" value="T=1-106"/>
</dbReference>
<dbReference type="PDB" id="4DR6">
    <property type="method" value="X-ray"/>
    <property type="resolution" value="3.30 A"/>
    <property type="chains" value="T=1-106"/>
</dbReference>
<dbReference type="PDB" id="4DR7">
    <property type="method" value="X-ray"/>
    <property type="resolution" value="3.75 A"/>
    <property type="chains" value="T=1-106"/>
</dbReference>
<dbReference type="PDB" id="4DUY">
    <property type="method" value="X-ray"/>
    <property type="resolution" value="3.39 A"/>
    <property type="chains" value="T=1-106"/>
</dbReference>
<dbReference type="PDB" id="4DUZ">
    <property type="method" value="X-ray"/>
    <property type="resolution" value="3.65 A"/>
    <property type="chains" value="T=1-106"/>
</dbReference>
<dbReference type="PDB" id="4DV0">
    <property type="method" value="X-ray"/>
    <property type="resolution" value="3.85 A"/>
    <property type="chains" value="T=1-106"/>
</dbReference>
<dbReference type="PDB" id="4DV1">
    <property type="method" value="X-ray"/>
    <property type="resolution" value="3.85 A"/>
    <property type="chains" value="T=1-106"/>
</dbReference>
<dbReference type="PDB" id="4DV2">
    <property type="method" value="X-ray"/>
    <property type="resolution" value="3.65 A"/>
    <property type="chains" value="T=1-106"/>
</dbReference>
<dbReference type="PDB" id="4DV3">
    <property type="method" value="X-ray"/>
    <property type="resolution" value="3.55 A"/>
    <property type="chains" value="T=1-106"/>
</dbReference>
<dbReference type="PDB" id="4DV4">
    <property type="method" value="X-ray"/>
    <property type="resolution" value="3.65 A"/>
    <property type="chains" value="T=1-106"/>
</dbReference>
<dbReference type="PDB" id="4DV5">
    <property type="method" value="X-ray"/>
    <property type="resolution" value="3.68 A"/>
    <property type="chains" value="T=1-106"/>
</dbReference>
<dbReference type="PDB" id="4DV6">
    <property type="method" value="X-ray"/>
    <property type="resolution" value="3.30 A"/>
    <property type="chains" value="T=1-106"/>
</dbReference>
<dbReference type="PDB" id="4DV7">
    <property type="method" value="X-ray"/>
    <property type="resolution" value="3.29 A"/>
    <property type="chains" value="T=1-106"/>
</dbReference>
<dbReference type="PDB" id="4GKJ">
    <property type="method" value="X-ray"/>
    <property type="resolution" value="3.30 A"/>
    <property type="chains" value="T=8-106"/>
</dbReference>
<dbReference type="PDB" id="4GKK">
    <property type="method" value="X-ray"/>
    <property type="resolution" value="3.20 A"/>
    <property type="chains" value="T=8-106"/>
</dbReference>
<dbReference type="PDB" id="4JI0">
    <property type="method" value="X-ray"/>
    <property type="resolution" value="3.49 A"/>
    <property type="chains" value="T=1-106"/>
</dbReference>
<dbReference type="PDB" id="4JI1">
    <property type="method" value="X-ray"/>
    <property type="resolution" value="3.14 A"/>
    <property type="chains" value="T=1-106"/>
</dbReference>
<dbReference type="PDB" id="4JI2">
    <property type="method" value="X-ray"/>
    <property type="resolution" value="3.64 A"/>
    <property type="chains" value="T=1-106"/>
</dbReference>
<dbReference type="PDB" id="4JI3">
    <property type="method" value="X-ray"/>
    <property type="resolution" value="3.35 A"/>
    <property type="chains" value="T=1-106"/>
</dbReference>
<dbReference type="PDB" id="4JI4">
    <property type="method" value="X-ray"/>
    <property type="resolution" value="3.69 A"/>
    <property type="chains" value="T=1-106"/>
</dbReference>
<dbReference type="PDB" id="4JI5">
    <property type="method" value="X-ray"/>
    <property type="resolution" value="3.85 A"/>
    <property type="chains" value="T=1-106"/>
</dbReference>
<dbReference type="PDB" id="4JI6">
    <property type="method" value="X-ray"/>
    <property type="resolution" value="3.55 A"/>
    <property type="chains" value="T=1-106"/>
</dbReference>
<dbReference type="PDB" id="4JI7">
    <property type="method" value="X-ray"/>
    <property type="resolution" value="3.50 A"/>
    <property type="chains" value="T=1-106"/>
</dbReference>
<dbReference type="PDB" id="4JI8">
    <property type="method" value="X-ray"/>
    <property type="resolution" value="3.74 A"/>
    <property type="chains" value="T=1-106"/>
</dbReference>
<dbReference type="PDB" id="4JV5">
    <property type="method" value="X-ray"/>
    <property type="resolution" value="3.16 A"/>
    <property type="chains" value="T=8-106"/>
</dbReference>
<dbReference type="PDB" id="4JYA">
    <property type="method" value="X-ray"/>
    <property type="resolution" value="3.10 A"/>
    <property type="chains" value="T=8-106"/>
</dbReference>
<dbReference type="PDB" id="4K0K">
    <property type="method" value="X-ray"/>
    <property type="resolution" value="3.40 A"/>
    <property type="chains" value="T=8-106"/>
</dbReference>
<dbReference type="PDB" id="4KHP">
    <property type="method" value="X-ray"/>
    <property type="resolution" value="3.10 A"/>
    <property type="chains" value="T=8-106"/>
</dbReference>
<dbReference type="PDB" id="4L47">
    <property type="method" value="X-ray"/>
    <property type="resolution" value="3.22 A"/>
    <property type="chains" value="QT/XT=1-106"/>
</dbReference>
<dbReference type="PDB" id="4L71">
    <property type="method" value="X-ray"/>
    <property type="resolution" value="3.90 A"/>
    <property type="chains" value="QT/XT=1-106"/>
</dbReference>
<dbReference type="PDB" id="4LEL">
    <property type="method" value="X-ray"/>
    <property type="resolution" value="3.90 A"/>
    <property type="chains" value="QT/XT=1-106"/>
</dbReference>
<dbReference type="PDB" id="4LF4">
    <property type="method" value="X-ray"/>
    <property type="resolution" value="3.34 A"/>
    <property type="chains" value="T=1-106"/>
</dbReference>
<dbReference type="PDB" id="4LF5">
    <property type="method" value="X-ray"/>
    <property type="resolution" value="3.75 A"/>
    <property type="chains" value="T=1-106"/>
</dbReference>
<dbReference type="PDB" id="4LF6">
    <property type="method" value="X-ray"/>
    <property type="resolution" value="3.31 A"/>
    <property type="chains" value="T=1-106"/>
</dbReference>
<dbReference type="PDB" id="4LF7">
    <property type="method" value="X-ray"/>
    <property type="resolution" value="3.15 A"/>
    <property type="chains" value="T=1-106"/>
</dbReference>
<dbReference type="PDB" id="4LF8">
    <property type="method" value="X-ray"/>
    <property type="resolution" value="3.15 A"/>
    <property type="chains" value="T=1-106"/>
</dbReference>
<dbReference type="PDB" id="4LF9">
    <property type="method" value="X-ray"/>
    <property type="resolution" value="3.28 A"/>
    <property type="chains" value="T=1-106"/>
</dbReference>
<dbReference type="PDB" id="4LFA">
    <property type="method" value="X-ray"/>
    <property type="resolution" value="3.65 A"/>
    <property type="chains" value="T=1-106"/>
</dbReference>
<dbReference type="PDB" id="4LFB">
    <property type="method" value="X-ray"/>
    <property type="resolution" value="3.01 A"/>
    <property type="chains" value="T=1-106"/>
</dbReference>
<dbReference type="PDB" id="4LFC">
    <property type="method" value="X-ray"/>
    <property type="resolution" value="3.60 A"/>
    <property type="chains" value="T=1-106"/>
</dbReference>
<dbReference type="PDB" id="4LFZ">
    <property type="method" value="X-ray"/>
    <property type="resolution" value="3.92 A"/>
    <property type="chains" value="QT/XT=1-106"/>
</dbReference>
<dbReference type="PDB" id="4LNT">
    <property type="method" value="X-ray"/>
    <property type="resolution" value="2.94 A"/>
    <property type="chains" value="QT/XT=1-106"/>
</dbReference>
<dbReference type="PDB" id="4LSK">
    <property type="method" value="X-ray"/>
    <property type="resolution" value="3.48 A"/>
    <property type="chains" value="QT/XT=1-106"/>
</dbReference>
<dbReference type="PDB" id="4LT8">
    <property type="method" value="X-ray"/>
    <property type="resolution" value="3.14 A"/>
    <property type="chains" value="QT/XT=1-106"/>
</dbReference>
<dbReference type="PDB" id="4NXM">
    <property type="method" value="X-ray"/>
    <property type="resolution" value="3.65 A"/>
    <property type="chains" value="T=1-106"/>
</dbReference>
<dbReference type="PDB" id="4NXN">
    <property type="method" value="X-ray"/>
    <property type="resolution" value="3.54 A"/>
    <property type="chains" value="T=1-106"/>
</dbReference>
<dbReference type="PDB" id="4OX9">
    <property type="method" value="X-ray"/>
    <property type="resolution" value="3.80 A"/>
    <property type="chains" value="T=1-106"/>
</dbReference>
<dbReference type="PDB" id="4P6F">
    <property type="method" value="X-ray"/>
    <property type="resolution" value="3.60 A"/>
    <property type="chains" value="QT/XT=1-106"/>
</dbReference>
<dbReference type="PDB" id="4P70">
    <property type="method" value="X-ray"/>
    <property type="resolution" value="3.68 A"/>
    <property type="chains" value="QT/XT=1-106"/>
</dbReference>
<dbReference type="PDB" id="4TUA">
    <property type="method" value="X-ray"/>
    <property type="resolution" value="3.60 A"/>
    <property type="chains" value="QT/XT=1-106"/>
</dbReference>
<dbReference type="PDB" id="4TUB">
    <property type="method" value="X-ray"/>
    <property type="resolution" value="3.60 A"/>
    <property type="chains" value="QT/XT=1-106"/>
</dbReference>
<dbReference type="PDB" id="4TUC">
    <property type="method" value="X-ray"/>
    <property type="resolution" value="3.60 A"/>
    <property type="chains" value="QT/XT=1-106"/>
</dbReference>
<dbReference type="PDB" id="4TUD">
    <property type="method" value="X-ray"/>
    <property type="resolution" value="3.60 A"/>
    <property type="chains" value="QT/XT=1-106"/>
</dbReference>
<dbReference type="PDB" id="4TUE">
    <property type="method" value="X-ray"/>
    <property type="resolution" value="3.50 A"/>
    <property type="chains" value="QT/XT=1-106"/>
</dbReference>
<dbReference type="PDB" id="4V42">
    <property type="method" value="X-ray"/>
    <property type="resolution" value="5.50 A"/>
    <property type="chains" value="W=1-106"/>
</dbReference>
<dbReference type="PDB" id="4V49">
    <property type="method" value="X-ray"/>
    <property type="resolution" value="8.70 A"/>
    <property type="chains" value="T=8-106"/>
</dbReference>
<dbReference type="PDB" id="4V4A">
    <property type="method" value="X-ray"/>
    <property type="resolution" value="9.50 A"/>
    <property type="chains" value="T=8-106"/>
</dbReference>
<dbReference type="PDB" id="4V4I">
    <property type="method" value="X-ray"/>
    <property type="resolution" value="3.71 A"/>
    <property type="chains" value="u=1-106"/>
</dbReference>
<dbReference type="PDB" id="4V4P">
    <property type="method" value="X-ray"/>
    <property type="resolution" value="5.50 A"/>
    <property type="chains" value="BW=1-106"/>
</dbReference>
<dbReference type="PDB" id="4V4R">
    <property type="method" value="X-ray"/>
    <property type="resolution" value="5.90 A"/>
    <property type="chains" value="AT=1-106"/>
</dbReference>
<dbReference type="PDB" id="4V4S">
    <property type="method" value="X-ray"/>
    <property type="resolution" value="6.76 A"/>
    <property type="chains" value="AT=1-106"/>
</dbReference>
<dbReference type="PDB" id="4V4T">
    <property type="method" value="X-ray"/>
    <property type="resolution" value="6.46 A"/>
    <property type="chains" value="AT=1-106"/>
</dbReference>
<dbReference type="PDB" id="4V4X">
    <property type="method" value="X-ray"/>
    <property type="resolution" value="5.00 A"/>
    <property type="chains" value="AW=1-106"/>
</dbReference>
<dbReference type="PDB" id="4V4Y">
    <property type="method" value="X-ray"/>
    <property type="resolution" value="5.50 A"/>
    <property type="chains" value="AW=1-106"/>
</dbReference>
<dbReference type="PDB" id="4V4Z">
    <property type="method" value="X-ray"/>
    <property type="resolution" value="4.51 A"/>
    <property type="chains" value="AW=1-106"/>
</dbReference>
<dbReference type="PDB" id="4V51">
    <property type="method" value="X-ray"/>
    <property type="resolution" value="2.80 A"/>
    <property type="chains" value="AT/CT=2-106"/>
</dbReference>
<dbReference type="PDB" id="4V5A">
    <property type="method" value="X-ray"/>
    <property type="resolution" value="3.50 A"/>
    <property type="chains" value="AT/CT=2-106"/>
</dbReference>
<dbReference type="PDB" id="4V5C">
    <property type="method" value="X-ray"/>
    <property type="resolution" value="3.30 A"/>
    <property type="chains" value="AT/CT=1-106"/>
</dbReference>
<dbReference type="PDB" id="4V5D">
    <property type="method" value="X-ray"/>
    <property type="resolution" value="3.50 A"/>
    <property type="chains" value="AT/CT=1-106"/>
</dbReference>
<dbReference type="PDB" id="4V5E">
    <property type="method" value="X-ray"/>
    <property type="resolution" value="3.45 A"/>
    <property type="chains" value="AT/CT=1-106"/>
</dbReference>
<dbReference type="PDB" id="4V5F">
    <property type="method" value="X-ray"/>
    <property type="resolution" value="3.60 A"/>
    <property type="chains" value="AT/CT=1-106"/>
</dbReference>
<dbReference type="PDB" id="4V5G">
    <property type="method" value="X-ray"/>
    <property type="resolution" value="3.60 A"/>
    <property type="chains" value="AT/CT=1-106"/>
</dbReference>
<dbReference type="PDB" id="4V5J">
    <property type="method" value="X-ray"/>
    <property type="resolution" value="3.10 A"/>
    <property type="chains" value="AT/CT=1-106"/>
</dbReference>
<dbReference type="PDB" id="4V5K">
    <property type="method" value="X-ray"/>
    <property type="resolution" value="3.20 A"/>
    <property type="chains" value="AT/CT=1-106"/>
</dbReference>
<dbReference type="PDB" id="4V5L">
    <property type="method" value="X-ray"/>
    <property type="resolution" value="3.10 A"/>
    <property type="chains" value="AT=1-106"/>
</dbReference>
<dbReference type="PDB" id="4V5M">
    <property type="method" value="EM"/>
    <property type="resolution" value="7.80 A"/>
    <property type="chains" value="AT=1-106"/>
</dbReference>
<dbReference type="PDB" id="4V5N">
    <property type="method" value="EM"/>
    <property type="resolution" value="7.60 A"/>
    <property type="chains" value="AT=1-106"/>
</dbReference>
<dbReference type="PDB" id="4V5P">
    <property type="method" value="X-ray"/>
    <property type="resolution" value="3.10 A"/>
    <property type="chains" value="AT/CT=1-106"/>
</dbReference>
<dbReference type="PDB" id="4V5Q">
    <property type="method" value="X-ray"/>
    <property type="resolution" value="3.10 A"/>
    <property type="chains" value="AT/CT=1-106"/>
</dbReference>
<dbReference type="PDB" id="4V5R">
    <property type="method" value="X-ray"/>
    <property type="resolution" value="3.10 A"/>
    <property type="chains" value="AT/CT=1-106"/>
</dbReference>
<dbReference type="PDB" id="4V5S">
    <property type="method" value="X-ray"/>
    <property type="resolution" value="3.10 A"/>
    <property type="chains" value="AT/CT=1-106"/>
</dbReference>
<dbReference type="PDB" id="4V68">
    <property type="method" value="EM"/>
    <property type="resolution" value="6.40 A"/>
    <property type="chains" value="AT=8-106"/>
</dbReference>
<dbReference type="PDB" id="4V6A">
    <property type="method" value="X-ray"/>
    <property type="resolution" value="3.10 A"/>
    <property type="chains" value="AT/CT=1-106"/>
</dbReference>
<dbReference type="PDB" id="4V6F">
    <property type="method" value="X-ray"/>
    <property type="resolution" value="3.10 A"/>
    <property type="chains" value="BW/CW=1-106"/>
</dbReference>
<dbReference type="PDB" id="4V6G">
    <property type="method" value="X-ray"/>
    <property type="resolution" value="3.50 A"/>
    <property type="chains" value="AW/CW=1-106"/>
</dbReference>
<dbReference type="PDB" id="4V7J">
    <property type="method" value="X-ray"/>
    <property type="resolution" value="3.30 A"/>
    <property type="chains" value="At/Bt=1-106"/>
</dbReference>
<dbReference type="PDB" id="4V7K">
    <property type="method" value="X-ray"/>
    <property type="resolution" value="3.60 A"/>
    <property type="chains" value="At/Bt=1-106"/>
</dbReference>
<dbReference type="PDB" id="4V7L">
    <property type="method" value="X-ray"/>
    <property type="resolution" value="3.00 A"/>
    <property type="chains" value="AT/CT=1-106"/>
</dbReference>
<dbReference type="PDB" id="4V7M">
    <property type="method" value="X-ray"/>
    <property type="resolution" value="3.45 A"/>
    <property type="chains" value="AT/CT=1-106"/>
</dbReference>
<dbReference type="PDB" id="4V7W">
    <property type="method" value="X-ray"/>
    <property type="resolution" value="3.00 A"/>
    <property type="chains" value="AT/CT=1-106"/>
</dbReference>
<dbReference type="PDB" id="4V7X">
    <property type="method" value="X-ray"/>
    <property type="resolution" value="3.00 A"/>
    <property type="chains" value="AT/CT=1-106"/>
</dbReference>
<dbReference type="PDB" id="4V7Y">
    <property type="method" value="X-ray"/>
    <property type="resolution" value="3.00 A"/>
    <property type="chains" value="AT/CT=1-106"/>
</dbReference>
<dbReference type="PDB" id="4V7Z">
    <property type="method" value="X-ray"/>
    <property type="resolution" value="3.10 A"/>
    <property type="chains" value="AT/CT=1-106"/>
</dbReference>
<dbReference type="PDB" id="4V87">
    <property type="method" value="X-ray"/>
    <property type="resolution" value="3.10 A"/>
    <property type="chains" value="BW/CW=1-106"/>
</dbReference>
<dbReference type="PDB" id="4V8A">
    <property type="method" value="X-ray"/>
    <property type="resolution" value="3.20 A"/>
    <property type="chains" value="CT/DT=1-106"/>
</dbReference>
<dbReference type="PDB" id="4V8B">
    <property type="method" value="X-ray"/>
    <property type="resolution" value="3.00 A"/>
    <property type="chains" value="AW/CW=1-106"/>
</dbReference>
<dbReference type="PDB" id="4V8C">
    <property type="method" value="X-ray"/>
    <property type="resolution" value="3.30 A"/>
    <property type="chains" value="CW/DW=1-106"/>
</dbReference>
<dbReference type="PDB" id="4V8D">
    <property type="method" value="X-ray"/>
    <property type="resolution" value="3.00 A"/>
    <property type="chains" value="AW/CW=1-106"/>
</dbReference>
<dbReference type="PDB" id="4V8E">
    <property type="method" value="X-ray"/>
    <property type="resolution" value="3.30 A"/>
    <property type="chains" value="BW/DW=1-106"/>
</dbReference>
<dbReference type="PDB" id="4V8F">
    <property type="method" value="X-ray"/>
    <property type="resolution" value="3.30 A"/>
    <property type="chains" value="BW/CW=1-106"/>
</dbReference>
<dbReference type="PDB" id="4V8G">
    <property type="method" value="X-ray"/>
    <property type="resolution" value="3.00 A"/>
    <property type="chains" value="AT/CT=1-106"/>
</dbReference>
<dbReference type="PDB" id="4V8H">
    <property type="method" value="X-ray"/>
    <property type="resolution" value="3.10 A"/>
    <property type="chains" value="AT/CT=1-106"/>
</dbReference>
<dbReference type="PDB" id="4V8I">
    <property type="method" value="X-ray"/>
    <property type="resolution" value="2.70 A"/>
    <property type="chains" value="AT/CT=1-106"/>
</dbReference>
<dbReference type="PDB" id="4V8J">
    <property type="method" value="X-ray"/>
    <property type="resolution" value="3.90 A"/>
    <property type="chains" value="AT/CT=1-106"/>
</dbReference>
<dbReference type="PDB" id="4V8N">
    <property type="method" value="X-ray"/>
    <property type="resolution" value="3.10 A"/>
    <property type="chains" value="AT/CT=1-106"/>
</dbReference>
<dbReference type="PDB" id="4V8O">
    <property type="method" value="X-ray"/>
    <property type="resolution" value="3.80 A"/>
    <property type="chains" value="AT=1-106"/>
</dbReference>
<dbReference type="PDB" id="4V8Q">
    <property type="method" value="X-ray"/>
    <property type="resolution" value="3.10 A"/>
    <property type="chains" value="BT=1-106"/>
</dbReference>
<dbReference type="PDB" id="4V8U">
    <property type="method" value="X-ray"/>
    <property type="resolution" value="3.70 A"/>
    <property type="chains" value="AT/CT=1-106"/>
</dbReference>
<dbReference type="PDB" id="4V8X">
    <property type="method" value="X-ray"/>
    <property type="resolution" value="3.35 A"/>
    <property type="chains" value="AT/CT=1-106"/>
</dbReference>
<dbReference type="PDB" id="4V90">
    <property type="method" value="X-ray"/>
    <property type="resolution" value="2.95 A"/>
    <property type="chains" value="AT=1-106"/>
</dbReference>
<dbReference type="PDB" id="4V95">
    <property type="method" value="X-ray"/>
    <property type="resolution" value="3.20 A"/>
    <property type="chains" value="AT/CT=1-106"/>
</dbReference>
<dbReference type="PDB" id="4V97">
    <property type="method" value="X-ray"/>
    <property type="resolution" value="3.52 A"/>
    <property type="chains" value="AT/CT=1-106"/>
</dbReference>
<dbReference type="PDB" id="4V9A">
    <property type="method" value="X-ray"/>
    <property type="resolution" value="3.30 A"/>
    <property type="chains" value="AW/CW=1-106"/>
</dbReference>
<dbReference type="PDB" id="4V9B">
    <property type="method" value="X-ray"/>
    <property type="resolution" value="3.10 A"/>
    <property type="chains" value="AW/CW=1-106"/>
</dbReference>
<dbReference type="PDB" id="4V9H">
    <property type="method" value="X-ray"/>
    <property type="resolution" value="2.86 A"/>
    <property type="chains" value="AT=8-106"/>
</dbReference>
<dbReference type="PDB" id="4V9I">
    <property type="method" value="X-ray"/>
    <property type="resolution" value="3.30 A"/>
    <property type="chains" value="AT/CT=8-106"/>
</dbReference>
<dbReference type="PDB" id="4V9R">
    <property type="method" value="X-ray"/>
    <property type="resolution" value="3.00 A"/>
    <property type="chains" value="AT/CT=1-106"/>
</dbReference>
<dbReference type="PDB" id="4V9S">
    <property type="method" value="X-ray"/>
    <property type="resolution" value="3.10 A"/>
    <property type="chains" value="AT/CT=1-106"/>
</dbReference>
<dbReference type="PDB" id="4W2E">
    <property type="method" value="X-ray"/>
    <property type="resolution" value="2.90 A"/>
    <property type="chains" value="t=1-106"/>
</dbReference>
<dbReference type="PDB" id="4W2F">
    <property type="method" value="X-ray"/>
    <property type="resolution" value="2.40 A"/>
    <property type="chains" value="AT/CT=1-106"/>
</dbReference>
<dbReference type="PDB" id="4W2G">
    <property type="method" value="X-ray"/>
    <property type="resolution" value="2.55 A"/>
    <property type="chains" value="AT/CT=1-106"/>
</dbReference>
<dbReference type="PDB" id="4W2H">
    <property type="method" value="X-ray"/>
    <property type="resolution" value="2.70 A"/>
    <property type="chains" value="AT/CT=1-106"/>
</dbReference>
<dbReference type="PDB" id="4W2I">
    <property type="method" value="X-ray"/>
    <property type="resolution" value="2.70 A"/>
    <property type="chains" value="AT/CT=1-106"/>
</dbReference>
<dbReference type="PDB" id="4W4G">
    <property type="method" value="X-ray"/>
    <property type="resolution" value="3.30 A"/>
    <property type="chains" value="QT/XT=1-106"/>
</dbReference>
<dbReference type="PDB" id="4WPO">
    <property type="method" value="X-ray"/>
    <property type="resolution" value="2.80 A"/>
    <property type="chains" value="BT/DT=1-106"/>
</dbReference>
<dbReference type="PDB" id="4WQ1">
    <property type="method" value="X-ray"/>
    <property type="resolution" value="3.10 A"/>
    <property type="chains" value="BA/BI=1-106"/>
</dbReference>
<dbReference type="PDB" id="4WQF">
    <property type="method" value="X-ray"/>
    <property type="resolution" value="2.80 A"/>
    <property type="chains" value="BT/DT=1-106"/>
</dbReference>
<dbReference type="PDB" id="4WQR">
    <property type="method" value="X-ray"/>
    <property type="resolution" value="3.15 A"/>
    <property type="chains" value="BA/BI=1-106"/>
</dbReference>
<dbReference type="PDB" id="4WQU">
    <property type="method" value="X-ray"/>
    <property type="resolution" value="2.80 A"/>
    <property type="chains" value="BT/DT=1-106"/>
</dbReference>
<dbReference type="PDB" id="4WQY">
    <property type="method" value="X-ray"/>
    <property type="resolution" value="2.80 A"/>
    <property type="chains" value="BT/DT=1-106"/>
</dbReference>
<dbReference type="PDB" id="4WR6">
    <property type="method" value="X-ray"/>
    <property type="resolution" value="3.05 A"/>
    <property type="chains" value="BA/BI=1-106"/>
</dbReference>
<dbReference type="PDB" id="4WRA">
    <property type="method" value="X-ray"/>
    <property type="resolution" value="3.05 A"/>
    <property type="chains" value="BA/BI=1-106"/>
</dbReference>
<dbReference type="PDB" id="4WRO">
    <property type="method" value="X-ray"/>
    <property type="resolution" value="3.05 A"/>
    <property type="chains" value="BI=1-106"/>
</dbReference>
<dbReference type="PDB" id="4WSD">
    <property type="method" value="X-ray"/>
    <property type="resolution" value="2.95 A"/>
    <property type="chains" value="BA/BI=1-106"/>
</dbReference>
<dbReference type="PDB" id="4WSM">
    <property type="method" value="X-ray"/>
    <property type="resolution" value="3.30 A"/>
    <property type="chains" value="BA/BI=1-106"/>
</dbReference>
<dbReference type="PDB" id="4WT1">
    <property type="method" value="X-ray"/>
    <property type="resolution" value="3.05 A"/>
    <property type="chains" value="BA/BI=1-106"/>
</dbReference>
<dbReference type="PDB" id="4WT8">
    <property type="method" value="X-ray"/>
    <property type="resolution" value="3.40 A"/>
    <property type="chains" value="AU/BU=8-106"/>
</dbReference>
<dbReference type="PDB" id="4WU1">
    <property type="method" value="X-ray"/>
    <property type="resolution" value="3.20 A"/>
    <property type="chains" value="BA/BI=1-106"/>
</dbReference>
<dbReference type="PDB" id="4WZD">
    <property type="method" value="X-ray"/>
    <property type="resolution" value="3.10 A"/>
    <property type="chains" value="BA/BI=1-106"/>
</dbReference>
<dbReference type="PDB" id="4WZO">
    <property type="method" value="X-ray"/>
    <property type="resolution" value="3.30 A"/>
    <property type="chains" value="BA/BI=1-106"/>
</dbReference>
<dbReference type="PDB" id="4X62">
    <property type="method" value="X-ray"/>
    <property type="resolution" value="3.45 A"/>
    <property type="chains" value="T=8-106"/>
</dbReference>
<dbReference type="PDB" id="4X64">
    <property type="method" value="X-ray"/>
    <property type="resolution" value="3.35 A"/>
    <property type="chains" value="T=8-106"/>
</dbReference>
<dbReference type="PDB" id="4X65">
    <property type="method" value="X-ray"/>
    <property type="resolution" value="3.35 A"/>
    <property type="chains" value="T=8-106"/>
</dbReference>
<dbReference type="PDB" id="4X66">
    <property type="method" value="X-ray"/>
    <property type="resolution" value="3.45 A"/>
    <property type="chains" value="T=8-106"/>
</dbReference>
<dbReference type="PDB" id="4Y4O">
    <property type="method" value="X-ray"/>
    <property type="resolution" value="2.30 A"/>
    <property type="chains" value="1t/2t=1-106"/>
</dbReference>
<dbReference type="PDB" id="4Y4P">
    <property type="method" value="X-ray"/>
    <property type="resolution" value="2.50 A"/>
    <property type="chains" value="1t/2t=1-106"/>
</dbReference>
<dbReference type="PDB" id="4YHH">
    <property type="method" value="X-ray"/>
    <property type="resolution" value="3.42 A"/>
    <property type="chains" value="T=8-106"/>
</dbReference>
<dbReference type="PDB" id="4YPB">
    <property type="method" value="X-ray"/>
    <property type="resolution" value="3.40 A"/>
    <property type="chains" value="QT/XT=1-106"/>
</dbReference>
<dbReference type="PDB" id="4YY3">
    <property type="method" value="X-ray"/>
    <property type="resolution" value="3.60 A"/>
    <property type="chains" value="T=1-106"/>
</dbReference>
<dbReference type="PDB" id="4YZV">
    <property type="method" value="X-ray"/>
    <property type="resolution" value="3.10 A"/>
    <property type="chains" value="QT/XT=1-106"/>
</dbReference>
<dbReference type="PDB" id="4Z3S">
    <property type="method" value="X-ray"/>
    <property type="resolution" value="2.65 A"/>
    <property type="chains" value="1t/2t=1-106"/>
</dbReference>
<dbReference type="PDB" id="4Z8C">
    <property type="method" value="X-ray"/>
    <property type="resolution" value="2.90 A"/>
    <property type="chains" value="1t/2t=1-106"/>
</dbReference>
<dbReference type="PDB" id="4ZER">
    <property type="method" value="X-ray"/>
    <property type="resolution" value="3.10 A"/>
    <property type="chains" value="1t/2t=6-103"/>
</dbReference>
<dbReference type="PDB" id="4ZSN">
    <property type="method" value="X-ray"/>
    <property type="resolution" value="3.60 A"/>
    <property type="chains" value="QT/XT=1-106"/>
</dbReference>
<dbReference type="PDB" id="5A9Z">
    <property type="method" value="EM"/>
    <property type="resolution" value="4.70 A"/>
    <property type="chains" value="BX=8-106"/>
</dbReference>
<dbReference type="PDB" id="5AA0">
    <property type="method" value="EM"/>
    <property type="resolution" value="5.00 A"/>
    <property type="chains" value="BX=8-106"/>
</dbReference>
<dbReference type="PDB" id="5BR8">
    <property type="method" value="X-ray"/>
    <property type="resolution" value="3.40 A"/>
    <property type="chains" value="T=1-106"/>
</dbReference>
<dbReference type="PDB" id="5CZP">
    <property type="method" value="X-ray"/>
    <property type="resolution" value="3.30 A"/>
    <property type="chains" value="QT/XT=1-106"/>
</dbReference>
<dbReference type="PDB" id="5D8B">
    <property type="method" value="X-ray"/>
    <property type="resolution" value="3.63 A"/>
    <property type="chains" value="QC/UA=1-106"/>
</dbReference>
<dbReference type="PDB" id="5DFE">
    <property type="method" value="X-ray"/>
    <property type="resolution" value="3.10 A"/>
    <property type="chains" value="QT/XT=1-106"/>
</dbReference>
<dbReference type="PDB" id="5DOX">
    <property type="method" value="X-ray"/>
    <property type="resolution" value="3.10 A"/>
    <property type="chains" value="1t/2t=1-106"/>
</dbReference>
<dbReference type="PDB" id="5DOY">
    <property type="method" value="X-ray"/>
    <property type="resolution" value="2.60 A"/>
    <property type="chains" value="1t/2t=1-106"/>
</dbReference>
<dbReference type="PDB" id="5E7K">
    <property type="method" value="X-ray"/>
    <property type="resolution" value="3.20 A"/>
    <property type="chains" value="BA/BI=1-106"/>
</dbReference>
<dbReference type="PDB" id="5E81">
    <property type="method" value="X-ray"/>
    <property type="resolution" value="2.95 A"/>
    <property type="chains" value="BA/BI=1-106"/>
</dbReference>
<dbReference type="PDB" id="5EL4">
    <property type="method" value="X-ray"/>
    <property type="resolution" value="3.15 A"/>
    <property type="chains" value="BA/BI=1-106"/>
</dbReference>
<dbReference type="PDB" id="5EL5">
    <property type="method" value="X-ray"/>
    <property type="resolution" value="3.15 A"/>
    <property type="chains" value="BA/BI=1-106"/>
</dbReference>
<dbReference type="PDB" id="5EL6">
    <property type="method" value="X-ray"/>
    <property type="resolution" value="3.10 A"/>
    <property type="chains" value="BA/BI=1-106"/>
</dbReference>
<dbReference type="PDB" id="5EL7">
    <property type="method" value="X-ray"/>
    <property type="resolution" value="3.15 A"/>
    <property type="chains" value="BA/BI=1-106"/>
</dbReference>
<dbReference type="PDB" id="5F8K">
    <property type="method" value="X-ray"/>
    <property type="resolution" value="2.80 A"/>
    <property type="chains" value="1t/2t=6-103"/>
</dbReference>
<dbReference type="PDB" id="5FDU">
    <property type="method" value="X-ray"/>
    <property type="resolution" value="2.90 A"/>
    <property type="chains" value="1t/2t=6-103"/>
</dbReference>
<dbReference type="PDB" id="5FDV">
    <property type="method" value="X-ray"/>
    <property type="resolution" value="2.80 A"/>
    <property type="chains" value="1t/2t=6-103"/>
</dbReference>
<dbReference type="PDB" id="5HAU">
    <property type="method" value="X-ray"/>
    <property type="resolution" value="3.00 A"/>
    <property type="chains" value="1t/2t=1-106"/>
</dbReference>
<dbReference type="PDB" id="5HCP">
    <property type="method" value="X-ray"/>
    <property type="resolution" value="2.89 A"/>
    <property type="chains" value="1t/2t=1-106"/>
</dbReference>
<dbReference type="PDB" id="5HCQ">
    <property type="method" value="X-ray"/>
    <property type="resolution" value="2.80 A"/>
    <property type="chains" value="1t/2t=1-106"/>
</dbReference>
<dbReference type="PDB" id="5HCR">
    <property type="method" value="X-ray"/>
    <property type="resolution" value="2.80 A"/>
    <property type="chains" value="1t/2t=1-106"/>
</dbReference>
<dbReference type="PDB" id="5HD1">
    <property type="method" value="X-ray"/>
    <property type="resolution" value="2.70 A"/>
    <property type="chains" value="1t/2t=1-106"/>
</dbReference>
<dbReference type="PDB" id="5IB7">
    <property type="method" value="X-ray"/>
    <property type="resolution" value="2.99 A"/>
    <property type="chains" value="BA/BI=1-106"/>
</dbReference>
<dbReference type="PDB" id="5IB8">
    <property type="method" value="X-ray"/>
    <property type="resolution" value="3.13 A"/>
    <property type="chains" value="BA/BI=1-106"/>
</dbReference>
<dbReference type="PDB" id="5IBB">
    <property type="method" value="X-ray"/>
    <property type="resolution" value="2.96 A"/>
    <property type="chains" value="BA/BI=1-106"/>
</dbReference>
<dbReference type="PDB" id="5IMQ">
    <property type="method" value="EM"/>
    <property type="resolution" value="3.80 A"/>
    <property type="chains" value="X=1-106"/>
</dbReference>
<dbReference type="PDB" id="5IMR">
    <property type="method" value="EM"/>
    <property type="chains" value="X=1-106"/>
</dbReference>
<dbReference type="PDB" id="5IWA">
    <property type="method" value="X-ray"/>
    <property type="resolution" value="3.50 A"/>
    <property type="chains" value="T=4-106"/>
</dbReference>
<dbReference type="PDB" id="5J30">
    <property type="method" value="X-ray"/>
    <property type="resolution" value="3.20 A"/>
    <property type="chains" value="QT/XT=1-106"/>
</dbReference>
<dbReference type="PDB" id="5J3C">
    <property type="method" value="X-ray"/>
    <property type="resolution" value="3.04 A"/>
    <property type="chains" value="QT/XT=1-106"/>
</dbReference>
<dbReference type="PDB" id="5J4B">
    <property type="method" value="X-ray"/>
    <property type="resolution" value="2.60 A"/>
    <property type="chains" value="1t/2t=1-106"/>
</dbReference>
<dbReference type="PDB" id="5J4C">
    <property type="method" value="X-ray"/>
    <property type="resolution" value="2.80 A"/>
    <property type="chains" value="1t/2t=1-106"/>
</dbReference>
<dbReference type="PDB" id="5J8B">
    <property type="method" value="X-ray"/>
    <property type="resolution" value="2.60 A"/>
    <property type="chains" value="t=1-106"/>
</dbReference>
<dbReference type="PDB" id="5LMN">
    <property type="method" value="EM"/>
    <property type="resolution" value="3.55 A"/>
    <property type="chains" value="T=1-106"/>
</dbReference>
<dbReference type="PDB" id="5LMO">
    <property type="method" value="EM"/>
    <property type="resolution" value="4.30 A"/>
    <property type="chains" value="T=1-106"/>
</dbReference>
<dbReference type="PDB" id="5LMP">
    <property type="method" value="EM"/>
    <property type="resolution" value="5.35 A"/>
    <property type="chains" value="T=1-106"/>
</dbReference>
<dbReference type="PDB" id="5LMQ">
    <property type="method" value="EM"/>
    <property type="resolution" value="4.20 A"/>
    <property type="chains" value="T=1-106"/>
</dbReference>
<dbReference type="PDB" id="5LMR">
    <property type="method" value="EM"/>
    <property type="resolution" value="4.45 A"/>
    <property type="chains" value="T=1-106"/>
</dbReference>
<dbReference type="PDB" id="5LMS">
    <property type="method" value="EM"/>
    <property type="resolution" value="5.10 A"/>
    <property type="chains" value="T=1-106"/>
</dbReference>
<dbReference type="PDB" id="5LMT">
    <property type="method" value="EM"/>
    <property type="resolution" value="4.15 A"/>
    <property type="chains" value="T=1-106"/>
</dbReference>
<dbReference type="PDB" id="5LMU">
    <property type="method" value="EM"/>
    <property type="resolution" value="4.00 A"/>
    <property type="chains" value="T=1-106"/>
</dbReference>
<dbReference type="PDB" id="5LMV">
    <property type="method" value="EM"/>
    <property type="resolution" value="4.90 A"/>
    <property type="chains" value="T=1-106"/>
</dbReference>
<dbReference type="PDB" id="5NDJ">
    <property type="method" value="X-ray"/>
    <property type="resolution" value="3.15 A"/>
    <property type="chains" value="BA/BI=1-106"/>
</dbReference>
<dbReference type="PDB" id="5NDK">
    <property type="method" value="X-ray"/>
    <property type="resolution" value="2.95 A"/>
    <property type="chains" value="BA/BI=1-106"/>
</dbReference>
<dbReference type="PDB" id="5OT7">
    <property type="method" value="EM"/>
    <property type="resolution" value="3.80 A"/>
    <property type="chains" value="S=8-106"/>
</dbReference>
<dbReference type="PDB" id="5UQ7">
    <property type="method" value="EM"/>
    <property type="resolution" value="3.50 A"/>
    <property type="chains" value="t=6-103"/>
</dbReference>
<dbReference type="PDB" id="5UQ8">
    <property type="method" value="EM"/>
    <property type="resolution" value="3.20 A"/>
    <property type="chains" value="t=6-103"/>
</dbReference>
<dbReference type="PDB" id="5VP2">
    <property type="method" value="X-ray"/>
    <property type="resolution" value="2.80 A"/>
    <property type="chains" value="1t/2t=1-106"/>
</dbReference>
<dbReference type="PDB" id="5VPO">
    <property type="method" value="X-ray"/>
    <property type="resolution" value="3.34 A"/>
    <property type="chains" value="QT/XT=1-106"/>
</dbReference>
<dbReference type="PDB" id="5VPP">
    <property type="method" value="X-ray"/>
    <property type="resolution" value="3.90 A"/>
    <property type="chains" value="QT/XT=1-106"/>
</dbReference>
<dbReference type="PDB" id="5W4K">
    <property type="method" value="X-ray"/>
    <property type="resolution" value="2.70 A"/>
    <property type="chains" value="1t/2t=1-106"/>
</dbReference>
<dbReference type="PDB" id="5WIS">
    <property type="method" value="X-ray"/>
    <property type="resolution" value="2.70 A"/>
    <property type="chains" value="1t/2t=1-106"/>
</dbReference>
<dbReference type="PDB" id="5WIT">
    <property type="method" value="X-ray"/>
    <property type="resolution" value="2.60 A"/>
    <property type="chains" value="1t/2t=1-106"/>
</dbReference>
<dbReference type="PDB" id="5WNP">
    <property type="method" value="X-ray"/>
    <property type="resolution" value="3.30 A"/>
    <property type="chains" value="T=8-106"/>
</dbReference>
<dbReference type="PDB" id="5WNQ">
    <property type="method" value="X-ray"/>
    <property type="resolution" value="3.50 A"/>
    <property type="chains" value="T=8-106"/>
</dbReference>
<dbReference type="PDB" id="5WNR">
    <property type="method" value="X-ray"/>
    <property type="resolution" value="3.50 A"/>
    <property type="chains" value="T=8-106"/>
</dbReference>
<dbReference type="PDB" id="5WNS">
    <property type="method" value="X-ray"/>
    <property type="resolution" value="3.50 A"/>
    <property type="chains" value="T=8-106"/>
</dbReference>
<dbReference type="PDB" id="5WNT">
    <property type="method" value="X-ray"/>
    <property type="resolution" value="3.30 A"/>
    <property type="chains" value="T=8-106"/>
</dbReference>
<dbReference type="PDB" id="5WNU">
    <property type="method" value="X-ray"/>
    <property type="resolution" value="3.40 A"/>
    <property type="chains" value="T=8-106"/>
</dbReference>
<dbReference type="PDB" id="5WNV">
    <property type="method" value="X-ray"/>
    <property type="resolution" value="3.30 A"/>
    <property type="chains" value="T=8-106"/>
</dbReference>
<dbReference type="PDB" id="5ZLU">
    <property type="method" value="EM"/>
    <property type="resolution" value="3.60 A"/>
    <property type="chains" value="C=1-106"/>
</dbReference>
<dbReference type="PDB" id="6BUW">
    <property type="method" value="X-ray"/>
    <property type="resolution" value="3.50 A"/>
    <property type="chains" value="QT/XT=1-106"/>
</dbReference>
<dbReference type="PDB" id="6BZ6">
    <property type="method" value="X-ray"/>
    <property type="resolution" value="3.18 A"/>
    <property type="chains" value="QT/XT=1-106"/>
</dbReference>
<dbReference type="PDB" id="6BZ7">
    <property type="method" value="X-ray"/>
    <property type="resolution" value="3.68 A"/>
    <property type="chains" value="QT/XT=1-106"/>
</dbReference>
<dbReference type="PDB" id="6BZ8">
    <property type="method" value="X-ray"/>
    <property type="resolution" value="3.74 A"/>
    <property type="chains" value="QT/XT=1-106"/>
</dbReference>
<dbReference type="PDB" id="6C5L">
    <property type="method" value="X-ray"/>
    <property type="resolution" value="3.20 A"/>
    <property type="chains" value="AT/CT=1-106"/>
</dbReference>
<dbReference type="PDB" id="6CAE">
    <property type="method" value="X-ray"/>
    <property type="resolution" value="2.60 A"/>
    <property type="chains" value="1t/2t=1-106"/>
</dbReference>
<dbReference type="PDB" id="6CAO">
    <property type="method" value="X-ray"/>
    <property type="resolution" value="3.45 A"/>
    <property type="chains" value="T=8-106"/>
</dbReference>
<dbReference type="PDB" id="6CAP">
    <property type="method" value="X-ray"/>
    <property type="resolution" value="3.40 A"/>
    <property type="chains" value="T=8-106"/>
</dbReference>
<dbReference type="PDB" id="6CAQ">
    <property type="method" value="X-ray"/>
    <property type="resolution" value="3.40 A"/>
    <property type="chains" value="T=8-106"/>
</dbReference>
<dbReference type="PDB" id="6CAR">
    <property type="method" value="X-ray"/>
    <property type="resolution" value="3.40 A"/>
    <property type="chains" value="T=2-106"/>
</dbReference>
<dbReference type="PDB" id="6CAS">
    <property type="method" value="X-ray"/>
    <property type="resolution" value="3.50 A"/>
    <property type="chains" value="T=2-106"/>
</dbReference>
<dbReference type="PDB" id="6CFJ">
    <property type="method" value="X-ray"/>
    <property type="resolution" value="2.80 A"/>
    <property type="chains" value="1t/2t=1-106"/>
</dbReference>
<dbReference type="PDB" id="6CFK">
    <property type="method" value="X-ray"/>
    <property type="resolution" value="2.70 A"/>
    <property type="chains" value="1t/2t=1-106"/>
</dbReference>
<dbReference type="PDB" id="6CFL">
    <property type="method" value="X-ray"/>
    <property type="resolution" value="2.60 A"/>
    <property type="chains" value="1t/2t=1-106"/>
</dbReference>
<dbReference type="PDB" id="6CZR">
    <property type="method" value="X-ray"/>
    <property type="resolution" value="3.14 A"/>
    <property type="chains" value="1t/2t=6-103"/>
</dbReference>
<dbReference type="PDB" id="6DTI">
    <property type="method" value="X-ray"/>
    <property type="resolution" value="3.54 A"/>
    <property type="chains" value="T=1-106"/>
</dbReference>
<dbReference type="PDB" id="6FKR">
    <property type="method" value="X-ray"/>
    <property type="resolution" value="3.20 A"/>
    <property type="chains" value="1t/2t=8-103"/>
</dbReference>
<dbReference type="PDB" id="6GSJ">
    <property type="method" value="X-ray"/>
    <property type="resolution" value="2.96 A"/>
    <property type="chains" value="BA/BI=1-106"/>
</dbReference>
<dbReference type="PDB" id="6GSK">
    <property type="method" value="X-ray"/>
    <property type="resolution" value="3.36 A"/>
    <property type="chains" value="BA/BI=1-106"/>
</dbReference>
<dbReference type="PDB" id="6GSL">
    <property type="method" value="X-ray"/>
    <property type="resolution" value="3.16 A"/>
    <property type="chains" value="BA/BI=1-106"/>
</dbReference>
<dbReference type="PDB" id="6GZQ">
    <property type="method" value="EM"/>
    <property type="resolution" value="3.28 A"/>
    <property type="chains" value="T2=8-106"/>
</dbReference>
<dbReference type="PDB" id="6GZX">
    <property type="method" value="EM"/>
    <property type="resolution" value="4.57 A"/>
    <property type="chains" value="T3/T4=8-106"/>
</dbReference>
<dbReference type="PDB" id="6GZZ">
    <property type="method" value="EM"/>
    <property type="resolution" value="4.13 A"/>
    <property type="chains" value="T3/T4=8-106"/>
</dbReference>
<dbReference type="PDB" id="6MKN">
    <property type="method" value="X-ray"/>
    <property type="resolution" value="3.46 A"/>
    <property type="chains" value="T=1-106"/>
</dbReference>
<dbReference type="PDB" id="6MPF">
    <property type="method" value="X-ray"/>
    <property type="resolution" value="3.33 A"/>
    <property type="chains" value="T=8-106"/>
</dbReference>
<dbReference type="PDB" id="6MPI">
    <property type="method" value="X-ray"/>
    <property type="resolution" value="3.33 A"/>
    <property type="chains" value="T=1-106"/>
</dbReference>
<dbReference type="PDB" id="6N9E">
    <property type="method" value="X-ray"/>
    <property type="resolution" value="3.70 A"/>
    <property type="chains" value="1t/2t=1-106"/>
</dbReference>
<dbReference type="PDB" id="6N9F">
    <property type="method" value="X-ray"/>
    <property type="resolution" value="3.70 A"/>
    <property type="chains" value="1t/2t=1-106"/>
</dbReference>
<dbReference type="PDB" id="6ND5">
    <property type="method" value="X-ray"/>
    <property type="resolution" value="2.60 A"/>
    <property type="chains" value="1t/2t=1-106"/>
</dbReference>
<dbReference type="PDB" id="6ND6">
    <property type="method" value="X-ray"/>
    <property type="resolution" value="2.85 A"/>
    <property type="chains" value="1t/2t=1-106"/>
</dbReference>
<dbReference type="PDB" id="6NDK">
    <property type="method" value="X-ray"/>
    <property type="resolution" value="3.64 A"/>
    <property type="chains" value="QT/XT=1-106"/>
</dbReference>
<dbReference type="PDB" id="6NSH">
    <property type="method" value="X-ray"/>
    <property type="resolution" value="3.40 A"/>
    <property type="chains" value="QT/XT=1-106"/>
</dbReference>
<dbReference type="PDB" id="6NTA">
    <property type="method" value="X-ray"/>
    <property type="resolution" value="3.10 A"/>
    <property type="chains" value="QT/XT=1-106"/>
</dbReference>
<dbReference type="PDB" id="6NUO">
    <property type="method" value="X-ray"/>
    <property type="resolution" value="3.20 A"/>
    <property type="chains" value="QT/XT=1-106"/>
</dbReference>
<dbReference type="PDB" id="6NWY">
    <property type="method" value="X-ray"/>
    <property type="resolution" value="3.50 A"/>
    <property type="chains" value="QT/XT=1-106"/>
</dbReference>
<dbReference type="PDB" id="6NY6">
    <property type="method" value="X-ray"/>
    <property type="resolution" value="3.74 A"/>
    <property type="chains" value="T=1-106"/>
</dbReference>
<dbReference type="PDB" id="6O3M">
    <property type="method" value="X-ray"/>
    <property type="resolution" value="3.97 A"/>
    <property type="chains" value="QT/XT=1-106"/>
</dbReference>
<dbReference type="PDB" id="6O97">
    <property type="method" value="X-ray"/>
    <property type="resolution" value="2.75 A"/>
    <property type="chains" value="1t/2t=1-106"/>
</dbReference>
<dbReference type="PDB" id="6OF1">
    <property type="method" value="X-ray"/>
    <property type="resolution" value="2.80 A"/>
    <property type="chains" value="1t/2t=1-106"/>
</dbReference>
<dbReference type="PDB" id="6OF6">
    <property type="method" value="X-ray"/>
    <property type="resolution" value="3.20 A"/>
    <property type="chains" value="QT/XT=1-106"/>
</dbReference>
<dbReference type="PDB" id="6OJ2">
    <property type="method" value="X-ray"/>
    <property type="resolution" value="3.20 A"/>
    <property type="chains" value="QT/XT=1-106"/>
</dbReference>
<dbReference type="PDB" id="6OPE">
    <property type="method" value="X-ray"/>
    <property type="resolution" value="3.10 A"/>
    <property type="chains" value="QT/XT=1-106"/>
</dbReference>
<dbReference type="PDB" id="6ORD">
    <property type="method" value="X-ray"/>
    <property type="resolution" value="3.10 A"/>
    <property type="chains" value="QT/XT=1-106"/>
</dbReference>
<dbReference type="PDB" id="6OSI">
    <property type="method" value="X-ray"/>
    <property type="resolution" value="4.14 A"/>
    <property type="chains" value="QT/XT=1-106"/>
</dbReference>
<dbReference type="PDB" id="6OTR">
    <property type="method" value="X-ray"/>
    <property type="resolution" value="3.12 A"/>
    <property type="chains" value="QT/XT=1-106"/>
</dbReference>
<dbReference type="PDB" id="6OXA">
    <property type="method" value="X-ray"/>
    <property type="resolution" value="3.25 A"/>
    <property type="chains" value="QT/XT=1-106"/>
</dbReference>
<dbReference type="PDB" id="6OXI">
    <property type="method" value="X-ray"/>
    <property type="resolution" value="3.50 A"/>
    <property type="chains" value="QT/XT=1-106"/>
</dbReference>
<dbReference type="PDB" id="6Q95">
    <property type="method" value="EM"/>
    <property type="resolution" value="3.70 A"/>
    <property type="chains" value="y=8-106"/>
</dbReference>
<dbReference type="PDB" id="6QNQ">
    <property type="method" value="X-ray"/>
    <property type="resolution" value="3.50 A"/>
    <property type="chains" value="BA/BI=1-106"/>
</dbReference>
<dbReference type="PDB" id="6QNR">
    <property type="method" value="X-ray"/>
    <property type="resolution" value="3.10 A"/>
    <property type="chains" value="BA/BI=1-106"/>
</dbReference>
<dbReference type="PDB" id="6UCQ">
    <property type="method" value="X-ray"/>
    <property type="resolution" value="3.50 A"/>
    <property type="chains" value="1t/2t=1-106"/>
</dbReference>
<dbReference type="PDB" id="6UO1">
    <property type="method" value="X-ray"/>
    <property type="resolution" value="2.95 A"/>
    <property type="chains" value="1t/2t=1-106"/>
</dbReference>
<dbReference type="PDB" id="6XHV">
    <property type="method" value="X-ray"/>
    <property type="resolution" value="2.40 A"/>
    <property type="chains" value="1t/2t=1-106"/>
</dbReference>
<dbReference type="PDB" id="6XHW">
    <property type="method" value="X-ray"/>
    <property type="resolution" value="2.50 A"/>
    <property type="chains" value="1t/2t=1-106"/>
</dbReference>
<dbReference type="PDB" id="6XHX">
    <property type="method" value="X-ray"/>
    <property type="resolution" value="2.55 A"/>
    <property type="chains" value="1t/2t=1-106"/>
</dbReference>
<dbReference type="PDB" id="6XHY">
    <property type="method" value="X-ray"/>
    <property type="resolution" value="2.60 A"/>
    <property type="chains" value="1t/2t=1-106"/>
</dbReference>
<dbReference type="PDB" id="6XQD">
    <property type="method" value="X-ray"/>
    <property type="resolution" value="2.80 A"/>
    <property type="chains" value="1t/2t=1-106"/>
</dbReference>
<dbReference type="PDB" id="6XQE">
    <property type="method" value="X-ray"/>
    <property type="resolution" value="3.00 A"/>
    <property type="chains" value="1t/2t=1-106"/>
</dbReference>
<dbReference type="PDB" id="7AZO">
    <property type="method" value="X-ray"/>
    <property type="resolution" value="3.30 A"/>
    <property type="chains" value="S20A/S20B=1-106"/>
</dbReference>
<dbReference type="PDB" id="7AZS">
    <property type="method" value="X-ray"/>
    <property type="resolution" value="3.10 A"/>
    <property type="chains" value="S20A/S20B=1-106"/>
</dbReference>
<dbReference type="PDB" id="7DUG">
    <property type="method" value="X-ray"/>
    <property type="resolution" value="3.75 A"/>
    <property type="chains" value="T=1-106"/>
</dbReference>
<dbReference type="PDB" id="7DUH">
    <property type="method" value="X-ray"/>
    <property type="resolution" value="3.75 A"/>
    <property type="chains" value="T=1-106"/>
</dbReference>
<dbReference type="PDB" id="7DUI">
    <property type="method" value="X-ray"/>
    <property type="resolution" value="3.62 A"/>
    <property type="chains" value="T=1-106"/>
</dbReference>
<dbReference type="PDB" id="7DUJ">
    <property type="method" value="X-ray"/>
    <property type="resolution" value="3.75 A"/>
    <property type="chains" value="T=1-106"/>
</dbReference>
<dbReference type="PDB" id="7DUK">
    <property type="method" value="X-ray"/>
    <property type="resolution" value="3.60 A"/>
    <property type="chains" value="T=1-106"/>
</dbReference>
<dbReference type="PDB" id="7DUL">
    <property type="method" value="X-ray"/>
    <property type="resolution" value="3.62 A"/>
    <property type="chains" value="T=1-106"/>
</dbReference>
<dbReference type="PDB" id="7JQL">
    <property type="method" value="X-ray"/>
    <property type="resolution" value="3.00 A"/>
    <property type="chains" value="1t/2t=1-106"/>
</dbReference>
<dbReference type="PDB" id="7JQM">
    <property type="method" value="X-ray"/>
    <property type="resolution" value="3.05 A"/>
    <property type="chains" value="1t/2t=1-106"/>
</dbReference>
<dbReference type="PDB" id="7LH5">
    <property type="method" value="X-ray"/>
    <property type="resolution" value="3.27 A"/>
    <property type="chains" value="AT/CT=1-106"/>
</dbReference>
<dbReference type="PDB" id="7MD7">
    <property type="method" value="X-ray"/>
    <property type="resolution" value="2.80 A"/>
    <property type="chains" value="1t/2t=1-106"/>
</dbReference>
<dbReference type="PDB" id="7RQ8">
    <property type="method" value="X-ray"/>
    <property type="resolution" value="2.50 A"/>
    <property type="chains" value="1t/2t=1-106"/>
</dbReference>
<dbReference type="PDB" id="7RQ9">
    <property type="method" value="X-ray"/>
    <property type="resolution" value="2.60 A"/>
    <property type="chains" value="1t/2t=1-106"/>
</dbReference>
<dbReference type="PDB" id="7RQA">
    <property type="method" value="X-ray"/>
    <property type="resolution" value="2.40 A"/>
    <property type="chains" value="1t/2t=1-106"/>
</dbReference>
<dbReference type="PDB" id="7RQB">
    <property type="method" value="X-ray"/>
    <property type="resolution" value="2.45 A"/>
    <property type="chains" value="1t/2t=1-106"/>
</dbReference>
<dbReference type="PDB" id="7RQC">
    <property type="method" value="X-ray"/>
    <property type="resolution" value="2.50 A"/>
    <property type="chains" value="1t/2t=1-106"/>
</dbReference>
<dbReference type="PDB" id="7RQD">
    <property type="method" value="X-ray"/>
    <property type="resolution" value="2.50 A"/>
    <property type="chains" value="1t/2t=1-106"/>
</dbReference>
<dbReference type="PDB" id="7RQE">
    <property type="method" value="X-ray"/>
    <property type="resolution" value="2.40 A"/>
    <property type="chains" value="1t/2t=1-106"/>
</dbReference>
<dbReference type="PDB" id="7U2H">
    <property type="method" value="X-ray"/>
    <property type="resolution" value="2.55 A"/>
    <property type="chains" value="1t/2t=1-106"/>
</dbReference>
<dbReference type="PDB" id="7U2I">
    <property type="method" value="X-ray"/>
    <property type="resolution" value="2.55 A"/>
    <property type="chains" value="1t/2t=1-106"/>
</dbReference>
<dbReference type="PDB" id="7U2J">
    <property type="method" value="X-ray"/>
    <property type="resolution" value="2.55 A"/>
    <property type="chains" value="1t/2t=1-106"/>
</dbReference>
<dbReference type="PDB" id="7V2L">
    <property type="method" value="EM"/>
    <property type="resolution" value="3.30 A"/>
    <property type="chains" value="T=1-106"/>
</dbReference>
<dbReference type="PDB" id="7V2M">
    <property type="method" value="EM"/>
    <property type="resolution" value="3.40 A"/>
    <property type="chains" value="T=1-106"/>
</dbReference>
<dbReference type="PDB" id="7V2N">
    <property type="method" value="EM"/>
    <property type="resolution" value="3.60 A"/>
    <property type="chains" value="T=1-106"/>
</dbReference>
<dbReference type="PDB" id="7V2O">
    <property type="method" value="EM"/>
    <property type="resolution" value="3.50 A"/>
    <property type="chains" value="T=1-106"/>
</dbReference>
<dbReference type="PDB" id="7V2P">
    <property type="method" value="EM"/>
    <property type="resolution" value="3.30 A"/>
    <property type="chains" value="T=1-106"/>
</dbReference>
<dbReference type="PDB" id="7V2Q">
    <property type="method" value="EM"/>
    <property type="resolution" value="3.24 A"/>
    <property type="chains" value="T=1-106"/>
</dbReference>
<dbReference type="PDB" id="8CVJ">
    <property type="method" value="X-ray"/>
    <property type="resolution" value="2.40 A"/>
    <property type="chains" value="1t/2t=1-106"/>
</dbReference>
<dbReference type="PDB" id="8CVK">
    <property type="method" value="X-ray"/>
    <property type="resolution" value="2.50 A"/>
    <property type="chains" value="1t/2t=1-106"/>
</dbReference>
<dbReference type="PDB" id="8CVL">
    <property type="method" value="X-ray"/>
    <property type="resolution" value="2.30 A"/>
    <property type="chains" value="1t/2t=1-106"/>
</dbReference>
<dbReference type="PDB" id="8EKB">
    <property type="method" value="X-ray"/>
    <property type="resolution" value="2.70 A"/>
    <property type="chains" value="1t/2t=1-106"/>
</dbReference>
<dbReference type="PDB" id="8EV6">
    <property type="method" value="X-ray"/>
    <property type="resolution" value="2.95 A"/>
    <property type="chains" value="1t/2t=1-106"/>
</dbReference>
<dbReference type="PDB" id="8EV7">
    <property type="method" value="X-ray"/>
    <property type="resolution" value="2.89 A"/>
    <property type="chains" value="1t/2t=1-106"/>
</dbReference>
<dbReference type="PDB" id="8FC1">
    <property type="method" value="X-ray"/>
    <property type="resolution" value="2.50 A"/>
    <property type="chains" value="1t/2t=1-106"/>
</dbReference>
<dbReference type="PDB" id="8FC2">
    <property type="method" value="X-ray"/>
    <property type="resolution" value="2.50 A"/>
    <property type="chains" value="1t/2t=1-106"/>
</dbReference>
<dbReference type="PDB" id="8FC3">
    <property type="method" value="X-ray"/>
    <property type="resolution" value="2.60 A"/>
    <property type="chains" value="1t/2t=1-106"/>
</dbReference>
<dbReference type="PDB" id="8FC4">
    <property type="method" value="X-ray"/>
    <property type="resolution" value="2.45 A"/>
    <property type="chains" value="1t/2t=1-106"/>
</dbReference>
<dbReference type="PDB" id="8FC5">
    <property type="method" value="X-ray"/>
    <property type="resolution" value="2.65 A"/>
    <property type="chains" value="1t/2t=1-106"/>
</dbReference>
<dbReference type="PDB" id="8FC6">
    <property type="method" value="X-ray"/>
    <property type="resolution" value="2.35 A"/>
    <property type="chains" value="1t/2t=1-106"/>
</dbReference>
<dbReference type="PDB" id="8FOM">
    <property type="method" value="X-ray"/>
    <property type="resolution" value="3.58 A"/>
    <property type="chains" value="QT/XT=1-106"/>
</dbReference>
<dbReference type="PDB" id="8FON">
    <property type="method" value="X-ray"/>
    <property type="resolution" value="3.64 A"/>
    <property type="chains" value="QT/XT=1-106"/>
</dbReference>
<dbReference type="PDB" id="8G29">
    <property type="method" value="X-ray"/>
    <property type="resolution" value="2.55 A"/>
    <property type="chains" value="1t/2t=1-106"/>
</dbReference>
<dbReference type="PDB" id="8G2A">
    <property type="method" value="X-ray"/>
    <property type="resolution" value="2.45 A"/>
    <property type="chains" value="1t/2t=1-106"/>
</dbReference>
<dbReference type="PDB" id="8G2B">
    <property type="method" value="X-ray"/>
    <property type="resolution" value="2.55 A"/>
    <property type="chains" value="1t/2t=1-106"/>
</dbReference>
<dbReference type="PDB" id="8G2C">
    <property type="method" value="X-ray"/>
    <property type="resolution" value="2.65 A"/>
    <property type="chains" value="1t/2t=1-106"/>
</dbReference>
<dbReference type="PDB" id="8G2D">
    <property type="method" value="X-ray"/>
    <property type="resolution" value="2.70 A"/>
    <property type="chains" value="1t/2t=1-106"/>
</dbReference>
<dbReference type="PDB" id="8T8B">
    <property type="method" value="X-ray"/>
    <property type="resolution" value="2.65 A"/>
    <property type="chains" value="1t/2t=1-106"/>
</dbReference>
<dbReference type="PDB" id="8T8C">
    <property type="method" value="X-ray"/>
    <property type="resolution" value="2.60 A"/>
    <property type="chains" value="1t/2t=1-106"/>
</dbReference>
<dbReference type="PDB" id="8UD6">
    <property type="method" value="X-ray"/>
    <property type="resolution" value="2.70 A"/>
    <property type="chains" value="1t/2t=1-106"/>
</dbReference>
<dbReference type="PDB" id="8UD7">
    <property type="method" value="X-ray"/>
    <property type="resolution" value="2.55 A"/>
    <property type="chains" value="1t/2t=1-106"/>
</dbReference>
<dbReference type="PDB" id="8UD8">
    <property type="method" value="X-ray"/>
    <property type="resolution" value="2.60 A"/>
    <property type="chains" value="1t/2t=1-106"/>
</dbReference>
<dbReference type="PDB" id="8UVR">
    <property type="method" value="X-ray"/>
    <property type="resolution" value="2.60 A"/>
    <property type="chains" value="1t/2t=1-106"/>
</dbReference>
<dbReference type="PDB" id="8UVS">
    <property type="method" value="X-ray"/>
    <property type="resolution" value="2.75 A"/>
    <property type="chains" value="1t/2t=1-106"/>
</dbReference>
<dbReference type="PDB" id="8VTU">
    <property type="method" value="X-ray"/>
    <property type="resolution" value="2.40 A"/>
    <property type="chains" value="1t/2t=1-106"/>
</dbReference>
<dbReference type="PDB" id="8VTV">
    <property type="method" value="X-ray"/>
    <property type="resolution" value="2.55 A"/>
    <property type="chains" value="1t/2t=1-106"/>
</dbReference>
<dbReference type="PDB" id="8VTW">
    <property type="method" value="X-ray"/>
    <property type="resolution" value="2.35 A"/>
    <property type="chains" value="1t/2t=1-106"/>
</dbReference>
<dbReference type="PDB" id="8VTX">
    <property type="method" value="X-ray"/>
    <property type="resolution" value="2.40 A"/>
    <property type="chains" value="1t/2t=1-106"/>
</dbReference>
<dbReference type="PDB" id="8VTY">
    <property type="method" value="X-ray"/>
    <property type="resolution" value="2.60 A"/>
    <property type="chains" value="1t/2t=1-106"/>
</dbReference>
<dbReference type="PDB" id="9B00">
    <property type="method" value="X-ray"/>
    <property type="resolution" value="2.80 A"/>
    <property type="chains" value="1t/2t=1-106"/>
</dbReference>
<dbReference type="PDB" id="9D0J">
    <property type="method" value="X-ray"/>
    <property type="resolution" value="2.50 A"/>
    <property type="chains" value="1t/2t=1-106"/>
</dbReference>
<dbReference type="PDB" id="9D7R">
    <property type="method" value="X-ray"/>
    <property type="resolution" value="2.70 A"/>
    <property type="chains" value="1t/2t=1-106"/>
</dbReference>
<dbReference type="PDB" id="9D7S">
    <property type="method" value="X-ray"/>
    <property type="resolution" value="2.85 A"/>
    <property type="chains" value="1t/2t=1-106"/>
</dbReference>
<dbReference type="PDB" id="9D7T">
    <property type="method" value="X-ray"/>
    <property type="resolution" value="2.70 A"/>
    <property type="chains" value="1t/2t=1-106"/>
</dbReference>
<dbReference type="PDB" id="9DFC">
    <property type="method" value="X-ray"/>
    <property type="resolution" value="2.50 A"/>
    <property type="chains" value="1t/2t=1-106"/>
</dbReference>
<dbReference type="PDB" id="9DFD">
    <property type="method" value="X-ray"/>
    <property type="resolution" value="2.60 A"/>
    <property type="chains" value="1t/2t=1-106"/>
</dbReference>
<dbReference type="PDB" id="9DFE">
    <property type="method" value="X-ray"/>
    <property type="resolution" value="2.60 A"/>
    <property type="chains" value="1t/2t=1-106"/>
</dbReference>
<dbReference type="PDBsum" id="1FJG"/>
<dbReference type="PDBsum" id="1HNW"/>
<dbReference type="PDBsum" id="1HNX"/>
<dbReference type="PDBsum" id="1HNZ"/>
<dbReference type="PDBsum" id="1HR0"/>
<dbReference type="PDBsum" id="1I94"/>
<dbReference type="PDBsum" id="1I95"/>
<dbReference type="PDBsum" id="1I96"/>
<dbReference type="PDBsum" id="1I97"/>
<dbReference type="PDBsum" id="1IBK"/>
<dbReference type="PDBsum" id="1IBL"/>
<dbReference type="PDBsum" id="1IBM"/>
<dbReference type="PDBsum" id="1J5E"/>
<dbReference type="PDBsum" id="1JGO"/>
<dbReference type="PDBsum" id="1JGP"/>
<dbReference type="PDBsum" id="1JGQ"/>
<dbReference type="PDBsum" id="1ML5"/>
<dbReference type="PDBsum" id="1N32"/>
<dbReference type="PDBsum" id="1N33"/>
<dbReference type="PDBsum" id="1N34"/>
<dbReference type="PDBsum" id="1N36"/>
<dbReference type="PDBsum" id="1VVJ"/>
<dbReference type="PDBsum" id="1VY4"/>
<dbReference type="PDBsum" id="1VY5"/>
<dbReference type="PDBsum" id="1VY6"/>
<dbReference type="PDBsum" id="1VY7"/>
<dbReference type="PDBsum" id="1XMO"/>
<dbReference type="PDBsum" id="1XMQ"/>
<dbReference type="PDBsum" id="1XNQ"/>
<dbReference type="PDBsum" id="1XNR"/>
<dbReference type="PDBsum" id="2E5L"/>
<dbReference type="PDBsum" id="2F4V"/>
<dbReference type="PDBsum" id="2HHH"/>
<dbReference type="PDBsum" id="2UU9"/>
<dbReference type="PDBsum" id="2UUA"/>
<dbReference type="PDBsum" id="2UUB"/>
<dbReference type="PDBsum" id="2UUC"/>
<dbReference type="PDBsum" id="2ZM6"/>
<dbReference type="PDBsum" id="3OTO"/>
<dbReference type="PDBsum" id="4AQY"/>
<dbReference type="PDBsum" id="4B3M"/>
<dbReference type="PDBsum" id="4B3R"/>
<dbReference type="PDBsum" id="4B3S"/>
<dbReference type="PDBsum" id="4B3T"/>
<dbReference type="PDBsum" id="4DR1"/>
<dbReference type="PDBsum" id="4DR2"/>
<dbReference type="PDBsum" id="4DR3"/>
<dbReference type="PDBsum" id="4DR4"/>
<dbReference type="PDBsum" id="4DR5"/>
<dbReference type="PDBsum" id="4DR6"/>
<dbReference type="PDBsum" id="4DR7"/>
<dbReference type="PDBsum" id="4DUY"/>
<dbReference type="PDBsum" id="4DUZ"/>
<dbReference type="PDBsum" id="4DV0"/>
<dbReference type="PDBsum" id="4DV1"/>
<dbReference type="PDBsum" id="4DV2"/>
<dbReference type="PDBsum" id="4DV3"/>
<dbReference type="PDBsum" id="4DV4"/>
<dbReference type="PDBsum" id="4DV5"/>
<dbReference type="PDBsum" id="4DV6"/>
<dbReference type="PDBsum" id="4DV7"/>
<dbReference type="PDBsum" id="4GKJ"/>
<dbReference type="PDBsum" id="4GKK"/>
<dbReference type="PDBsum" id="4JI0"/>
<dbReference type="PDBsum" id="4JI1"/>
<dbReference type="PDBsum" id="4JI2"/>
<dbReference type="PDBsum" id="4JI3"/>
<dbReference type="PDBsum" id="4JI4"/>
<dbReference type="PDBsum" id="4JI5"/>
<dbReference type="PDBsum" id="4JI6"/>
<dbReference type="PDBsum" id="4JI7"/>
<dbReference type="PDBsum" id="4JI8"/>
<dbReference type="PDBsum" id="4JV5"/>
<dbReference type="PDBsum" id="4JYA"/>
<dbReference type="PDBsum" id="4K0K"/>
<dbReference type="PDBsum" id="4KHP"/>
<dbReference type="PDBsum" id="4L47"/>
<dbReference type="PDBsum" id="4L71"/>
<dbReference type="PDBsum" id="4LEL"/>
<dbReference type="PDBsum" id="4LF4"/>
<dbReference type="PDBsum" id="4LF5"/>
<dbReference type="PDBsum" id="4LF6"/>
<dbReference type="PDBsum" id="4LF7"/>
<dbReference type="PDBsum" id="4LF8"/>
<dbReference type="PDBsum" id="4LF9"/>
<dbReference type="PDBsum" id="4LFA"/>
<dbReference type="PDBsum" id="4LFB"/>
<dbReference type="PDBsum" id="4LFC"/>
<dbReference type="PDBsum" id="4LFZ"/>
<dbReference type="PDBsum" id="4LNT"/>
<dbReference type="PDBsum" id="4LSK"/>
<dbReference type="PDBsum" id="4LT8"/>
<dbReference type="PDBsum" id="4NXM"/>
<dbReference type="PDBsum" id="4NXN"/>
<dbReference type="PDBsum" id="4OX9"/>
<dbReference type="PDBsum" id="4P6F"/>
<dbReference type="PDBsum" id="4P70"/>
<dbReference type="PDBsum" id="4TUA"/>
<dbReference type="PDBsum" id="4TUB"/>
<dbReference type="PDBsum" id="4TUC"/>
<dbReference type="PDBsum" id="4TUD"/>
<dbReference type="PDBsum" id="4TUE"/>
<dbReference type="PDBsum" id="4V42"/>
<dbReference type="PDBsum" id="4V49"/>
<dbReference type="PDBsum" id="4V4A"/>
<dbReference type="PDBsum" id="4V4I"/>
<dbReference type="PDBsum" id="4V4P"/>
<dbReference type="PDBsum" id="4V4R"/>
<dbReference type="PDBsum" id="4V4S"/>
<dbReference type="PDBsum" id="4V4T"/>
<dbReference type="PDBsum" id="4V4X"/>
<dbReference type="PDBsum" id="4V4Y"/>
<dbReference type="PDBsum" id="4V4Z"/>
<dbReference type="PDBsum" id="4V51"/>
<dbReference type="PDBsum" id="4V5A"/>
<dbReference type="PDBsum" id="4V5C"/>
<dbReference type="PDBsum" id="4V5D"/>
<dbReference type="PDBsum" id="4V5E"/>
<dbReference type="PDBsum" id="4V5F"/>
<dbReference type="PDBsum" id="4V5G"/>
<dbReference type="PDBsum" id="4V5J"/>
<dbReference type="PDBsum" id="4V5K"/>
<dbReference type="PDBsum" id="4V5L"/>
<dbReference type="PDBsum" id="4V5M"/>
<dbReference type="PDBsum" id="4V5N"/>
<dbReference type="PDBsum" id="4V5P"/>
<dbReference type="PDBsum" id="4V5Q"/>
<dbReference type="PDBsum" id="4V5R"/>
<dbReference type="PDBsum" id="4V5S"/>
<dbReference type="PDBsum" id="4V68"/>
<dbReference type="PDBsum" id="4V6A"/>
<dbReference type="PDBsum" id="4V6F"/>
<dbReference type="PDBsum" id="4V6G"/>
<dbReference type="PDBsum" id="4V7J"/>
<dbReference type="PDBsum" id="4V7K"/>
<dbReference type="PDBsum" id="4V7L"/>
<dbReference type="PDBsum" id="4V7M"/>
<dbReference type="PDBsum" id="4V7W"/>
<dbReference type="PDBsum" id="4V7X"/>
<dbReference type="PDBsum" id="4V7Y"/>
<dbReference type="PDBsum" id="4V7Z"/>
<dbReference type="PDBsum" id="4V87"/>
<dbReference type="PDBsum" id="4V8A"/>
<dbReference type="PDBsum" id="4V8B"/>
<dbReference type="PDBsum" id="4V8C"/>
<dbReference type="PDBsum" id="4V8D"/>
<dbReference type="PDBsum" id="4V8E"/>
<dbReference type="PDBsum" id="4V8F"/>
<dbReference type="PDBsum" id="4V8G"/>
<dbReference type="PDBsum" id="4V8H"/>
<dbReference type="PDBsum" id="4V8I"/>
<dbReference type="PDBsum" id="4V8J"/>
<dbReference type="PDBsum" id="4V8N"/>
<dbReference type="PDBsum" id="4V8O"/>
<dbReference type="PDBsum" id="4V8Q"/>
<dbReference type="PDBsum" id="4V8U"/>
<dbReference type="PDBsum" id="4V8X"/>
<dbReference type="PDBsum" id="4V90"/>
<dbReference type="PDBsum" id="4V95"/>
<dbReference type="PDBsum" id="4V97"/>
<dbReference type="PDBsum" id="4V9A"/>
<dbReference type="PDBsum" id="4V9B"/>
<dbReference type="PDBsum" id="4V9H"/>
<dbReference type="PDBsum" id="4V9I"/>
<dbReference type="PDBsum" id="4V9R"/>
<dbReference type="PDBsum" id="4V9S"/>
<dbReference type="PDBsum" id="4W2E"/>
<dbReference type="PDBsum" id="4W2F"/>
<dbReference type="PDBsum" id="4W2G"/>
<dbReference type="PDBsum" id="4W2H"/>
<dbReference type="PDBsum" id="4W2I"/>
<dbReference type="PDBsum" id="4W4G"/>
<dbReference type="PDBsum" id="4WPO"/>
<dbReference type="PDBsum" id="4WQ1"/>
<dbReference type="PDBsum" id="4WQF"/>
<dbReference type="PDBsum" id="4WQR"/>
<dbReference type="PDBsum" id="4WQU"/>
<dbReference type="PDBsum" id="4WQY"/>
<dbReference type="PDBsum" id="4WR6"/>
<dbReference type="PDBsum" id="4WRA"/>
<dbReference type="PDBsum" id="4WRO"/>
<dbReference type="PDBsum" id="4WSD"/>
<dbReference type="PDBsum" id="4WSM"/>
<dbReference type="PDBsum" id="4WT1"/>
<dbReference type="PDBsum" id="4WT8"/>
<dbReference type="PDBsum" id="4WU1"/>
<dbReference type="PDBsum" id="4WZD"/>
<dbReference type="PDBsum" id="4WZO"/>
<dbReference type="PDBsum" id="4X62"/>
<dbReference type="PDBsum" id="4X64"/>
<dbReference type="PDBsum" id="4X65"/>
<dbReference type="PDBsum" id="4X66"/>
<dbReference type="PDBsum" id="4Y4O"/>
<dbReference type="PDBsum" id="4Y4P"/>
<dbReference type="PDBsum" id="4YHH"/>
<dbReference type="PDBsum" id="4YPB"/>
<dbReference type="PDBsum" id="4YY3"/>
<dbReference type="PDBsum" id="4YZV"/>
<dbReference type="PDBsum" id="4Z3S"/>
<dbReference type="PDBsum" id="4Z8C"/>
<dbReference type="PDBsum" id="4ZER"/>
<dbReference type="PDBsum" id="4ZSN"/>
<dbReference type="PDBsum" id="5A9Z"/>
<dbReference type="PDBsum" id="5AA0"/>
<dbReference type="PDBsum" id="5BR8"/>
<dbReference type="PDBsum" id="5CZP"/>
<dbReference type="PDBsum" id="5D8B"/>
<dbReference type="PDBsum" id="5DFE"/>
<dbReference type="PDBsum" id="5DOX"/>
<dbReference type="PDBsum" id="5DOY"/>
<dbReference type="PDBsum" id="5E7K"/>
<dbReference type="PDBsum" id="5E81"/>
<dbReference type="PDBsum" id="5EL4"/>
<dbReference type="PDBsum" id="5EL5"/>
<dbReference type="PDBsum" id="5EL6"/>
<dbReference type="PDBsum" id="5EL7"/>
<dbReference type="PDBsum" id="5F8K"/>
<dbReference type="PDBsum" id="5FDU"/>
<dbReference type="PDBsum" id="5FDV"/>
<dbReference type="PDBsum" id="5HAU"/>
<dbReference type="PDBsum" id="5HCP"/>
<dbReference type="PDBsum" id="5HCQ"/>
<dbReference type="PDBsum" id="5HCR"/>
<dbReference type="PDBsum" id="5HD1"/>
<dbReference type="PDBsum" id="5IB7"/>
<dbReference type="PDBsum" id="5IB8"/>
<dbReference type="PDBsum" id="5IBB"/>
<dbReference type="PDBsum" id="5IMQ"/>
<dbReference type="PDBsum" id="5IMR"/>
<dbReference type="PDBsum" id="5IWA"/>
<dbReference type="PDBsum" id="5J30"/>
<dbReference type="PDBsum" id="5J3C"/>
<dbReference type="PDBsum" id="5J4B"/>
<dbReference type="PDBsum" id="5J4C"/>
<dbReference type="PDBsum" id="5J8B"/>
<dbReference type="PDBsum" id="5LMN"/>
<dbReference type="PDBsum" id="5LMO"/>
<dbReference type="PDBsum" id="5LMP"/>
<dbReference type="PDBsum" id="5LMQ"/>
<dbReference type="PDBsum" id="5LMR"/>
<dbReference type="PDBsum" id="5LMS"/>
<dbReference type="PDBsum" id="5LMT"/>
<dbReference type="PDBsum" id="5LMU"/>
<dbReference type="PDBsum" id="5LMV"/>
<dbReference type="PDBsum" id="5NDJ"/>
<dbReference type="PDBsum" id="5NDK"/>
<dbReference type="PDBsum" id="5OT7"/>
<dbReference type="PDBsum" id="5UQ7"/>
<dbReference type="PDBsum" id="5UQ8"/>
<dbReference type="PDBsum" id="5VP2"/>
<dbReference type="PDBsum" id="5VPO"/>
<dbReference type="PDBsum" id="5VPP"/>
<dbReference type="PDBsum" id="5W4K"/>
<dbReference type="PDBsum" id="5WIS"/>
<dbReference type="PDBsum" id="5WIT"/>
<dbReference type="PDBsum" id="5WNP"/>
<dbReference type="PDBsum" id="5WNQ"/>
<dbReference type="PDBsum" id="5WNR"/>
<dbReference type="PDBsum" id="5WNS"/>
<dbReference type="PDBsum" id="5WNT"/>
<dbReference type="PDBsum" id="5WNU"/>
<dbReference type="PDBsum" id="5WNV"/>
<dbReference type="PDBsum" id="5ZLU"/>
<dbReference type="PDBsum" id="6BUW"/>
<dbReference type="PDBsum" id="6BZ6"/>
<dbReference type="PDBsum" id="6BZ7"/>
<dbReference type="PDBsum" id="6BZ8"/>
<dbReference type="PDBsum" id="6C5L"/>
<dbReference type="PDBsum" id="6CAE"/>
<dbReference type="PDBsum" id="6CAO"/>
<dbReference type="PDBsum" id="6CAP"/>
<dbReference type="PDBsum" id="6CAQ"/>
<dbReference type="PDBsum" id="6CAR"/>
<dbReference type="PDBsum" id="6CAS"/>
<dbReference type="PDBsum" id="6CFJ"/>
<dbReference type="PDBsum" id="6CFK"/>
<dbReference type="PDBsum" id="6CFL"/>
<dbReference type="PDBsum" id="6CZR"/>
<dbReference type="PDBsum" id="6DTI"/>
<dbReference type="PDBsum" id="6FKR"/>
<dbReference type="PDBsum" id="6GSJ"/>
<dbReference type="PDBsum" id="6GSK"/>
<dbReference type="PDBsum" id="6GSL"/>
<dbReference type="PDBsum" id="6GZQ"/>
<dbReference type="PDBsum" id="6GZX"/>
<dbReference type="PDBsum" id="6GZZ"/>
<dbReference type="PDBsum" id="6MKN"/>
<dbReference type="PDBsum" id="6MPF"/>
<dbReference type="PDBsum" id="6MPI"/>
<dbReference type="PDBsum" id="6N9E"/>
<dbReference type="PDBsum" id="6N9F"/>
<dbReference type="PDBsum" id="6ND5"/>
<dbReference type="PDBsum" id="6ND6"/>
<dbReference type="PDBsum" id="6NDK"/>
<dbReference type="PDBsum" id="6NSH"/>
<dbReference type="PDBsum" id="6NTA"/>
<dbReference type="PDBsum" id="6NUO"/>
<dbReference type="PDBsum" id="6NWY"/>
<dbReference type="PDBsum" id="6NY6"/>
<dbReference type="PDBsum" id="6O3M"/>
<dbReference type="PDBsum" id="6O97"/>
<dbReference type="PDBsum" id="6OF1"/>
<dbReference type="PDBsum" id="6OF6"/>
<dbReference type="PDBsum" id="6OJ2"/>
<dbReference type="PDBsum" id="6OPE"/>
<dbReference type="PDBsum" id="6ORD"/>
<dbReference type="PDBsum" id="6OSI"/>
<dbReference type="PDBsum" id="6OTR"/>
<dbReference type="PDBsum" id="6OXA"/>
<dbReference type="PDBsum" id="6OXI"/>
<dbReference type="PDBsum" id="6Q95"/>
<dbReference type="PDBsum" id="6QNQ"/>
<dbReference type="PDBsum" id="6QNR"/>
<dbReference type="PDBsum" id="6UCQ"/>
<dbReference type="PDBsum" id="6UO1"/>
<dbReference type="PDBsum" id="6XHV"/>
<dbReference type="PDBsum" id="6XHW"/>
<dbReference type="PDBsum" id="6XHX"/>
<dbReference type="PDBsum" id="6XHY"/>
<dbReference type="PDBsum" id="6XQD"/>
<dbReference type="PDBsum" id="6XQE"/>
<dbReference type="PDBsum" id="7AZO"/>
<dbReference type="PDBsum" id="7AZS"/>
<dbReference type="PDBsum" id="7DUG"/>
<dbReference type="PDBsum" id="7DUH"/>
<dbReference type="PDBsum" id="7DUI"/>
<dbReference type="PDBsum" id="7DUJ"/>
<dbReference type="PDBsum" id="7DUK"/>
<dbReference type="PDBsum" id="7DUL"/>
<dbReference type="PDBsum" id="7JQL"/>
<dbReference type="PDBsum" id="7JQM"/>
<dbReference type="PDBsum" id="7LH5"/>
<dbReference type="PDBsum" id="7MD7"/>
<dbReference type="PDBsum" id="7RQ8"/>
<dbReference type="PDBsum" id="7RQ9"/>
<dbReference type="PDBsum" id="7RQA"/>
<dbReference type="PDBsum" id="7RQB"/>
<dbReference type="PDBsum" id="7RQC"/>
<dbReference type="PDBsum" id="7RQD"/>
<dbReference type="PDBsum" id="7RQE"/>
<dbReference type="PDBsum" id="7U2H"/>
<dbReference type="PDBsum" id="7U2I"/>
<dbReference type="PDBsum" id="7U2J"/>
<dbReference type="PDBsum" id="7V2L"/>
<dbReference type="PDBsum" id="7V2M"/>
<dbReference type="PDBsum" id="7V2N"/>
<dbReference type="PDBsum" id="7V2O"/>
<dbReference type="PDBsum" id="7V2P"/>
<dbReference type="PDBsum" id="7V2Q"/>
<dbReference type="PDBsum" id="8CVJ"/>
<dbReference type="PDBsum" id="8CVK"/>
<dbReference type="PDBsum" id="8CVL"/>
<dbReference type="PDBsum" id="8EKB"/>
<dbReference type="PDBsum" id="8EV6"/>
<dbReference type="PDBsum" id="8EV7"/>
<dbReference type="PDBsum" id="8FC1"/>
<dbReference type="PDBsum" id="8FC2"/>
<dbReference type="PDBsum" id="8FC3"/>
<dbReference type="PDBsum" id="8FC4"/>
<dbReference type="PDBsum" id="8FC5"/>
<dbReference type="PDBsum" id="8FC6"/>
<dbReference type="PDBsum" id="8FOM"/>
<dbReference type="PDBsum" id="8FON"/>
<dbReference type="PDBsum" id="8G29"/>
<dbReference type="PDBsum" id="8G2A"/>
<dbReference type="PDBsum" id="8G2B"/>
<dbReference type="PDBsum" id="8G2C"/>
<dbReference type="PDBsum" id="8G2D"/>
<dbReference type="PDBsum" id="8T8B"/>
<dbReference type="PDBsum" id="8T8C"/>
<dbReference type="PDBsum" id="8UD6"/>
<dbReference type="PDBsum" id="8UD7"/>
<dbReference type="PDBsum" id="8UD8"/>
<dbReference type="PDBsum" id="8UVR"/>
<dbReference type="PDBsum" id="8UVS"/>
<dbReference type="PDBsum" id="8VTU"/>
<dbReference type="PDBsum" id="8VTV"/>
<dbReference type="PDBsum" id="8VTW"/>
<dbReference type="PDBsum" id="8VTX"/>
<dbReference type="PDBsum" id="8VTY"/>
<dbReference type="PDBsum" id="9B00"/>
<dbReference type="PDBsum" id="9D0J"/>
<dbReference type="PDBsum" id="9D7R"/>
<dbReference type="PDBsum" id="9D7S"/>
<dbReference type="PDBsum" id="9D7T"/>
<dbReference type="PDBsum" id="9DFC"/>
<dbReference type="PDBsum" id="9DFD"/>
<dbReference type="PDBsum" id="9DFE"/>
<dbReference type="EMDB" id="EMD-0101"/>
<dbReference type="EMDB" id="EMD-0104"/>
<dbReference type="EMDB" id="EMD-0105"/>
<dbReference type="EMDB" id="EMD-31655"/>
<dbReference type="EMDB" id="EMD-31656"/>
<dbReference type="EMDB" id="EMD-31657"/>
<dbReference type="EMDB" id="EMD-31658"/>
<dbReference type="EMDB" id="EMD-31659"/>
<dbReference type="EMDB" id="EMD-31660"/>
<dbReference type="EMDB" id="EMD-3852"/>
<dbReference type="EMDB" id="EMD-4073"/>
<dbReference type="EMDB" id="EMD-4074"/>
<dbReference type="EMDB" id="EMD-4075"/>
<dbReference type="EMDB" id="EMD-4076"/>
<dbReference type="EMDB" id="EMD-4077"/>
<dbReference type="EMDB" id="EMD-4078"/>
<dbReference type="EMDB" id="EMD-4079"/>
<dbReference type="EMDB" id="EMD-4080"/>
<dbReference type="EMDB" id="EMD-4083"/>
<dbReference type="EMDB" id="EMD-4475"/>
<dbReference type="EMDB" id="EMD-6934"/>
<dbReference type="EMDB" id="EMD-8596"/>
<dbReference type="EMDB" id="EMD-8597"/>
<dbReference type="SMR" id="P80380"/>
<dbReference type="IntAct" id="P80380">
    <property type="interactions" value="10"/>
</dbReference>
<dbReference type="DrugBank" id="DB08185">
    <property type="generic name" value="2-METHYLTHIO-N6-ISOPENTENYL-ADENOSINE-5'-MONOPHOSPHATE"/>
</dbReference>
<dbReference type="EnsemblBacteria" id="BAD71220">
    <property type="protein sequence ID" value="BAD71220"/>
    <property type="gene ID" value="BAD71220"/>
</dbReference>
<dbReference type="GeneID" id="3168087"/>
<dbReference type="KEGG" id="ttj:TTHA1397"/>
<dbReference type="PATRIC" id="fig|300852.9.peg.1371"/>
<dbReference type="eggNOG" id="COG0268">
    <property type="taxonomic scope" value="Bacteria"/>
</dbReference>
<dbReference type="HOGENOM" id="CLU_160655_3_1_0"/>
<dbReference type="PhylomeDB" id="P80380"/>
<dbReference type="EvolutionaryTrace" id="P80380"/>
<dbReference type="Proteomes" id="UP000000532">
    <property type="component" value="Chromosome"/>
</dbReference>
<dbReference type="GO" id="GO:0015935">
    <property type="term" value="C:small ribosomal subunit"/>
    <property type="evidence" value="ECO:0007669"/>
    <property type="project" value="TreeGrafter"/>
</dbReference>
<dbReference type="GO" id="GO:0070181">
    <property type="term" value="F:small ribosomal subunit rRNA binding"/>
    <property type="evidence" value="ECO:0007669"/>
    <property type="project" value="TreeGrafter"/>
</dbReference>
<dbReference type="GO" id="GO:0003735">
    <property type="term" value="F:structural constituent of ribosome"/>
    <property type="evidence" value="ECO:0007669"/>
    <property type="project" value="InterPro"/>
</dbReference>
<dbReference type="GO" id="GO:0006412">
    <property type="term" value="P:translation"/>
    <property type="evidence" value="ECO:0007669"/>
    <property type="project" value="UniProtKB-UniRule"/>
</dbReference>
<dbReference type="Gene3D" id="1.20.58.110">
    <property type="entry name" value="Ribosomal protein S20"/>
    <property type="match status" value="1"/>
</dbReference>
<dbReference type="HAMAP" id="MF_00500">
    <property type="entry name" value="Ribosomal_bS20"/>
    <property type="match status" value="1"/>
</dbReference>
<dbReference type="InterPro" id="IPR002583">
    <property type="entry name" value="Ribosomal_bS20"/>
</dbReference>
<dbReference type="InterPro" id="IPR036510">
    <property type="entry name" value="Ribosomal_bS20_sf"/>
</dbReference>
<dbReference type="NCBIfam" id="TIGR00029">
    <property type="entry name" value="S20"/>
    <property type="match status" value="1"/>
</dbReference>
<dbReference type="PANTHER" id="PTHR33398">
    <property type="entry name" value="30S RIBOSOMAL PROTEIN S20"/>
    <property type="match status" value="1"/>
</dbReference>
<dbReference type="PANTHER" id="PTHR33398:SF1">
    <property type="entry name" value="SMALL RIBOSOMAL SUBUNIT PROTEIN BS20C"/>
    <property type="match status" value="1"/>
</dbReference>
<dbReference type="Pfam" id="PF01649">
    <property type="entry name" value="Ribosomal_S20p"/>
    <property type="match status" value="1"/>
</dbReference>
<dbReference type="SUPFAM" id="SSF46992">
    <property type="entry name" value="Ribosomal protein S20"/>
    <property type="match status" value="1"/>
</dbReference>
<feature type="initiator methionine" description="Removed" evidence="3">
    <location>
        <position position="1"/>
    </location>
</feature>
<feature type="chain" id="PRO_0000168050" description="Small ribosomal subunit protein bS20">
    <location>
        <begin position="2"/>
        <end position="106"/>
    </location>
</feature>
<feature type="region of interest" description="Disordered" evidence="1">
    <location>
        <begin position="1"/>
        <end position="32"/>
    </location>
</feature>
<feature type="helix" evidence="5">
    <location>
        <begin position="11"/>
        <end position="13"/>
    </location>
</feature>
<feature type="helix" evidence="7">
    <location>
        <begin position="14"/>
        <end position="44"/>
    </location>
</feature>
<feature type="turn" evidence="7">
    <location>
        <begin position="45"/>
        <end position="47"/>
    </location>
</feature>
<feature type="helix" evidence="7">
    <location>
        <begin position="49"/>
        <end position="66"/>
    </location>
</feature>
<feature type="turn" evidence="6">
    <location>
        <begin position="70"/>
        <end position="74"/>
    </location>
</feature>
<feature type="helix" evidence="7">
    <location>
        <begin position="75"/>
        <end position="93"/>
    </location>
</feature>
<feature type="strand" evidence="8">
    <location>
        <begin position="94"/>
        <end position="96"/>
    </location>
</feature>
<feature type="strand" evidence="7">
    <location>
        <begin position="102"/>
        <end position="104"/>
    </location>
</feature>
<organism>
    <name type="scientific">Thermus thermophilus (strain ATCC 27634 / DSM 579 / HB8)</name>
    <dbReference type="NCBI Taxonomy" id="300852"/>
    <lineage>
        <taxon>Bacteria</taxon>
        <taxon>Thermotogati</taxon>
        <taxon>Deinococcota</taxon>
        <taxon>Deinococci</taxon>
        <taxon>Thermales</taxon>
        <taxon>Thermaceae</taxon>
        <taxon>Thermus</taxon>
    </lineage>
</organism>
<protein>
    <recommendedName>
        <fullName evidence="4">Small ribosomal subunit protein bS20</fullName>
    </recommendedName>
    <alternativeName>
        <fullName>30S ribosomal protein S20</fullName>
    </alternativeName>
</protein>
<keyword id="KW-0002">3D-structure</keyword>
<keyword id="KW-0903">Direct protein sequencing</keyword>
<keyword id="KW-1185">Reference proteome</keyword>
<keyword id="KW-0687">Ribonucleoprotein</keyword>
<keyword id="KW-0689">Ribosomal protein</keyword>
<keyword id="KW-0694">RNA-binding</keyword>
<keyword id="KW-0699">rRNA-binding</keyword>
<proteinExistence type="evidence at protein level"/>
<evidence type="ECO:0000256" key="1">
    <source>
        <dbReference type="SAM" id="MobiDB-lite"/>
    </source>
</evidence>
<evidence type="ECO:0000269" key="2">
    <source>
    </source>
</evidence>
<evidence type="ECO:0000269" key="3">
    <source>
    </source>
</evidence>
<evidence type="ECO:0000305" key="4"/>
<evidence type="ECO:0007829" key="5">
    <source>
        <dbReference type="PDB" id="2UU9"/>
    </source>
</evidence>
<evidence type="ECO:0007829" key="6">
    <source>
        <dbReference type="PDB" id="2UUA"/>
    </source>
</evidence>
<evidence type="ECO:0007829" key="7">
    <source>
        <dbReference type="PDB" id="2UUB"/>
    </source>
</evidence>
<evidence type="ECO:0007829" key="8">
    <source>
        <dbReference type="PDB" id="4KHP"/>
    </source>
</evidence>
<reference key="1">
    <citation type="journal article" date="2001" name="Biol. Chem.">
        <title>On the characterization of the putative S20-thx operon of Thermus thermophilus.</title>
        <authorList>
            <person name="Leontiadou F."/>
            <person name="Triantafillidou D."/>
            <person name="Choli-Papadopoulou T."/>
        </authorList>
    </citation>
    <scope>NUCLEOTIDE SEQUENCE [GENOMIC DNA]</scope>
</reference>
<reference key="2">
    <citation type="submission" date="2004-11" db="EMBL/GenBank/DDBJ databases">
        <title>Complete genome sequence of Thermus thermophilus HB8.</title>
        <authorList>
            <person name="Masui R."/>
            <person name="Kurokawa K."/>
            <person name="Nakagawa N."/>
            <person name="Tokunaga F."/>
            <person name="Koyama Y."/>
            <person name="Shibata T."/>
            <person name="Oshima T."/>
            <person name="Yokoyama S."/>
            <person name="Yasunaga T."/>
            <person name="Kuramitsu S."/>
        </authorList>
    </citation>
    <scope>NUCLEOTIDE SEQUENCE [LARGE SCALE GENOMIC DNA]</scope>
    <source>
        <strain>ATCC 27634 / DSM 579 / HB8</strain>
    </source>
</reference>
<reference key="3">
    <citation type="journal article" date="1994" name="Eur. J. Biochem.">
        <title>Purification and characterization of the 30S ribosomal proteins from the bacterium Thermus thermophilus.</title>
        <authorList>
            <person name="Tsiboli P."/>
            <person name="Herfurth E."/>
            <person name="Choli T."/>
        </authorList>
    </citation>
    <scope>PROTEIN SEQUENCE OF 2-33</scope>
</reference>
<reference key="4">
    <citation type="journal article" date="2005" name="Proteomics">
        <title>Extending ribosomal protein identifications to unsequenced bacterial strains using matrix-assisted laser desorption/ionization mass spectrometry.</title>
        <authorList>
            <person name="Suh M.-J."/>
            <person name="Hamburg D.M."/>
            <person name="Gregory S.T."/>
            <person name="Dahlberg A.E."/>
            <person name="Limbach P.A."/>
        </authorList>
    </citation>
    <scope>MASS SPECTROMETRY</scope>
    <source>
        <strain>ATCC 27634 / DSM 579 / HB8</strain>
    </source>
</reference>
<reference key="5">
    <citation type="journal article" date="1999" name="Nature">
        <title>Structure of a bacterial 30S ribosomal subunit at 5.5 A resolution.</title>
        <authorList>
            <person name="Clemons W.M. Jr."/>
            <person name="May J.L.C."/>
            <person name="Wimberly B.T."/>
            <person name="McCutcheon J.P."/>
            <person name="Capel M.S."/>
            <person name="Ramakrishnan V."/>
        </authorList>
    </citation>
    <scope>X-RAY CRYSTALLOGRAPHY (5.5 ANGSTROMS) OF THE 30S SUBUNIT</scope>
</reference>
<reference key="6">
    <citation type="journal article" date="2000" name="Nature">
        <title>Structure of the 30S ribosomal subunit.</title>
        <authorList>
            <person name="Wimberly B.T."/>
            <person name="Brodersen D.E."/>
            <person name="Clemons W.M. Jr."/>
            <person name="Morgan-Warren R.J."/>
            <person name="Carter A.P."/>
            <person name="Vonrhein C."/>
            <person name="Hartsch T."/>
            <person name="Ramakrishnan V."/>
        </authorList>
    </citation>
    <scope>X-RAY CRYSTALLOGRAPHY (3.05 ANGSTROMS) OF THE 30S SUBUNIT</scope>
</reference>
<reference key="7">
    <citation type="journal article" date="2000" name="Cell">
        <title>Structure of functionally activated small ribosomal subunit at 3.3 A resolution.</title>
        <authorList>
            <person name="Schluenzen F."/>
            <person name="Tocilj A."/>
            <person name="Zarivach R."/>
            <person name="Harms J."/>
            <person name="Gluehmann M."/>
            <person name="Janell D."/>
            <person name="Bashan A."/>
            <person name="Bartels H."/>
            <person name="Agmon I."/>
            <person name="Franceschi F."/>
            <person name="Yonath A."/>
        </authorList>
    </citation>
    <scope>X-RAY CRYSTALLOGRAPHY (3.3 ANGSTROMS) OF THE 30S SUBUNIT</scope>
</reference>
<reference key="8">
    <citation type="journal article" date="2000" name="Cell">
        <title>The structural basis for the action of the antibiotics tetracycline, pactamycin, and hygromycin B on the 30S ribosomal subunit.</title>
        <authorList>
            <person name="Brodersen D.E."/>
            <person name="Clemons W.M. Jr."/>
            <person name="Carter A.P."/>
            <person name="Morgan-Warren R.J."/>
            <person name="Wimberly B.T."/>
            <person name="Ramakrishnan V."/>
        </authorList>
    </citation>
    <scope>X-RAY CRYSTALLOGRAPHY (3.3 ANGSTROMS) OF THE 30S SUBUNIT</scope>
</reference>
<reference key="9">
    <citation type="journal article" date="2000" name="Nature">
        <title>Functional insights from the structure of the 30S ribosomal subunit and its interactions with antibiotics.</title>
        <authorList>
            <person name="Carter A.P."/>
            <person name="Clemons W.M. Jr."/>
            <person name="Brodersen D.E."/>
            <person name="Morgan-Warren R.J."/>
            <person name="Wimberly B.T."/>
            <person name="Ramakrishnan V."/>
        </authorList>
    </citation>
    <scope>X-RAY CRYSTALLOGRAPHY (3.0 ANGSTROMS) OF THE 30S SUBUNIT</scope>
</reference>
<reference key="10">
    <citation type="journal article" date="2001" name="Cell">
        <title>The path of messenger RNA through the ribosome.</title>
        <authorList>
            <person name="Yusupova G.Z."/>
            <person name="Yusupov M.M."/>
            <person name="Cate J.H.D."/>
            <person name="Noller H.F."/>
        </authorList>
    </citation>
    <scope>X-RAY CRYSTALLOGRAPHY (5.0 ANGSTROMS) OF THE RIBOSOME</scope>
</reference>
<reference key="11">
    <citation type="journal article" date="2001" name="EMBO J.">
        <title>Crystal structures of complexes of the small ribosomal subunit with tetracycline, edeine and IF3.</title>
        <authorList>
            <person name="Pioletti M."/>
            <person name="Schluenzen F."/>
            <person name="Harms J."/>
            <person name="Zarivach R."/>
            <person name="Gluehmann M."/>
            <person name="Avila H."/>
            <person name="Bashan A."/>
            <person name="Bartels H."/>
            <person name="Auerbach T."/>
            <person name="Jacobi C."/>
            <person name="Hartsch T."/>
            <person name="Yonath A."/>
            <person name="Franceschi F."/>
        </authorList>
    </citation>
    <scope>X-RAY CRYSTALLOGRAPHY (3.2 ANGSTROMS) OF THE 30S SUBUNIT</scope>
</reference>
<reference key="12">
    <citation type="journal article" date="2001" name="Science">
        <title>Crystal structure of an initiation factor bound to the 30S ribosomal subunit.</title>
        <authorList>
            <person name="Carter A.P."/>
            <person name="Clemons W.M. Jr."/>
            <person name="Brodersen D.E."/>
            <person name="Morgan-Warren R.J."/>
            <person name="Hartsch T."/>
            <person name="Wimberly B.T."/>
            <person name="Ramakrishnan V."/>
        </authorList>
    </citation>
    <scope>X-RAY CRYSTALLOGRAPHY (3.2 ANGSTROMS) OF THE 30S SUBUNIT</scope>
</reference>
<reference key="13">
    <citation type="journal article" date="2001" name="Science">
        <title>Crystal structure of the ribosome at 5.5 A resolution.</title>
        <authorList>
            <person name="Yusupov M.M."/>
            <person name="Yusupova G.Z."/>
            <person name="Baucom A."/>
            <person name="Lieberman K."/>
            <person name="Earnest T.N."/>
            <person name="Cate J.H.D."/>
            <person name="Noller H.F."/>
        </authorList>
    </citation>
    <scope>X-RAY CRYSTALLOGRAPHY (5.5 ANGSTROMS) OF THE RIBOSOME</scope>
</reference>
<reference key="14">
    <citation type="journal article" date="2001" name="Science">
        <title>Recognition of cognate transfer RNA by the 30S ribosomal subunit.</title>
        <authorList>
            <person name="Ogle J.M."/>
            <person name="Brodersen D.E."/>
            <person name="Clemons W.M. Jr."/>
            <person name="Tarry M.J."/>
            <person name="Carter A.P."/>
            <person name="Ramakrishnan V."/>
        </authorList>
    </citation>
    <scope>X-RAY CRYSTALLOGRAPHY (3.11 ANGSTROMS) OF THE 30S SUBUNIT</scope>
</reference>
<reference key="15">
    <citation type="journal article" date="2002" name="J. Mol. Biol.">
        <title>Crystal structure of the 30S ribosomal subunit from Thermus thermophilus: structure of the proteins and their interactions with 16S RNA.</title>
        <authorList>
            <person name="Brodersen D.E."/>
            <person name="Clemons W.M. Jr."/>
            <person name="Carter A.P."/>
            <person name="Wimberly B.T."/>
            <person name="Ramakrishnan V."/>
        </authorList>
    </citation>
    <scope>X-RAY CRYSTALLOGRAPHY (3.05 ANGSTROMS) OF THE 30S SUBUNIT</scope>
</reference>
<reference key="16">
    <citation type="journal article" date="2005" name="Cell">
        <title>Crystal structures of the ribosome in complex with release factors RF1 and RF2 bound to a cognate stop codon.</title>
        <authorList>
            <person name="Petry S."/>
            <person name="Brodersen D.E."/>
            <person name="Murphy F.V."/>
            <person name="Dunham C.M."/>
            <person name="Selmer M."/>
            <person name="Tarry M.J."/>
            <person name="Kelley A.C."/>
            <person name="Ramakrishnan V."/>
        </authorList>
    </citation>
    <scope>X-RAY CRYSTALLOGRAPHY (5.90 ANGSTROMS) OF 70S RIBOSOME IN COMPLEX WITH RF1 OR RF2</scope>
    <scope>SUBUNIT</scope>
</reference>
<reference key="17">
    <citation type="journal article" date="2008" name="Science">
        <title>Insights into translational termination from the structure of RF2 bound to the ribosome.</title>
        <authorList>
            <person name="Weixlbaumer A."/>
            <person name="Jin H."/>
            <person name="Neubauer C."/>
            <person name="Voorhees R.M."/>
            <person name="Petry S."/>
            <person name="Kelley A.C."/>
            <person name="Ramakrishnan V."/>
        </authorList>
    </citation>
    <scope>X-RAY CRYSTALLOGRAPHY (3.45 ANGSTROMS) OF 70S RIBOSOME IN COMPLEX WITH RF2</scope>
    <scope>SUBUNIT</scope>
</reference>
<reference key="18">
    <citation type="journal article" date="2010" name="Proc. Natl. Acad. Sci. U.S.A.">
        <title>Structure of the 70S ribosome bound to release factor 2 and a substrate analog provides insights into catalysis of peptide release.</title>
        <authorList>
            <person name="Jin H."/>
            <person name="Kelley A.C."/>
            <person name="Loakes D."/>
            <person name="Ramakrishnan V."/>
        </authorList>
    </citation>
    <scope>X-RAY CRYSTALLOGRAPHY (3.10 ANGSTROMS) OF 70S RIBOSOME IN COMPLEX WITH RF2</scope>
    <scope>SUBUNIT</scope>
</reference>
<gene>
    <name type="primary">rpsT</name>
    <name type="synonym">rps20</name>
    <name type="ordered locus">TTHA1397</name>
</gene>
<accession>P80380</accession>
<accession>Q5SIH2</accession>
<accession>Q9F2A9</accession>
<comment type="function">
    <text>One of the primary rRNA binding proteins, it binds directly to 16S rRNA where it nucleates assembly of the bottom of the body of the 30S subunit, by binding to several RNA helices of the 16S rRNA.</text>
</comment>
<comment type="subunit">
    <text>Part of the 30S ribosomal subunit.</text>
</comment>
<comment type="mass spectrometry"/>
<comment type="similarity">
    <text evidence="4">Belongs to the bacterial ribosomal protein bS20 family.</text>
</comment>
<name>RS20_THET8</name>